<organism>
    <name type="scientific">Clostridium botulinum</name>
    <dbReference type="NCBI Taxonomy" id="1491"/>
    <lineage>
        <taxon>Bacteria</taxon>
        <taxon>Bacillati</taxon>
        <taxon>Bacillota</taxon>
        <taxon>Clostridia</taxon>
        <taxon>Eubacteriales</taxon>
        <taxon>Clostridiaceae</taxon>
        <taxon>Clostridium</taxon>
    </lineage>
</organism>
<evidence type="ECO:0000255" key="1"/>
<evidence type="ECO:0000255" key="2">
    <source>
        <dbReference type="PROSITE-ProRule" id="PRU10095"/>
    </source>
</evidence>
<evidence type="ECO:0000269" key="3">
    <source>
    </source>
</evidence>
<evidence type="ECO:0000269" key="4">
    <source>
    </source>
</evidence>
<evidence type="ECO:0000269" key="5">
    <source>
    </source>
</evidence>
<evidence type="ECO:0000269" key="6">
    <source>
    </source>
</evidence>
<evidence type="ECO:0000269" key="7">
    <source>
    </source>
</evidence>
<evidence type="ECO:0000269" key="8">
    <source>
    </source>
</evidence>
<evidence type="ECO:0000269" key="9">
    <source>
    </source>
</evidence>
<evidence type="ECO:0000269" key="10">
    <source>
    </source>
</evidence>
<evidence type="ECO:0000269" key="11">
    <source>
    </source>
</evidence>
<evidence type="ECO:0000269" key="12">
    <source>
    </source>
</evidence>
<evidence type="ECO:0000269" key="13">
    <source>
    </source>
</evidence>
<evidence type="ECO:0000269" key="14">
    <source>
    </source>
</evidence>
<evidence type="ECO:0000269" key="15">
    <source>
    </source>
</evidence>
<evidence type="ECO:0000269" key="16">
    <source>
    </source>
</evidence>
<evidence type="ECO:0000269" key="17">
    <source>
    </source>
</evidence>
<evidence type="ECO:0000269" key="18">
    <source>
    </source>
</evidence>
<evidence type="ECO:0000269" key="19">
    <source>
    </source>
</evidence>
<evidence type="ECO:0000269" key="20">
    <source>
    </source>
</evidence>
<evidence type="ECO:0000269" key="21">
    <source>
    </source>
</evidence>
<evidence type="ECO:0000269" key="22">
    <source>
    </source>
</evidence>
<evidence type="ECO:0000269" key="23">
    <source>
    </source>
</evidence>
<evidence type="ECO:0000269" key="24">
    <source>
    </source>
</evidence>
<evidence type="ECO:0000269" key="25">
    <source>
    </source>
</evidence>
<evidence type="ECO:0000269" key="26">
    <source>
    </source>
</evidence>
<evidence type="ECO:0000269" key="27">
    <source>
    </source>
</evidence>
<evidence type="ECO:0000269" key="28">
    <source>
    </source>
</evidence>
<evidence type="ECO:0000269" key="29">
    <source>
    </source>
</evidence>
<evidence type="ECO:0000269" key="30">
    <source>
    </source>
</evidence>
<evidence type="ECO:0000269" key="31">
    <source>
    </source>
</evidence>
<evidence type="ECO:0000269" key="32">
    <source>
    </source>
</evidence>
<evidence type="ECO:0000269" key="33">
    <source>
    </source>
</evidence>
<evidence type="ECO:0000269" key="34">
    <source>
    </source>
</evidence>
<evidence type="ECO:0000269" key="35">
    <source>
    </source>
</evidence>
<evidence type="ECO:0000269" key="36">
    <source>
    </source>
</evidence>
<evidence type="ECO:0000269" key="37">
    <source>
    </source>
</evidence>
<evidence type="ECO:0000269" key="38">
    <source>
    </source>
</evidence>
<evidence type="ECO:0000269" key="39">
    <source>
    </source>
</evidence>
<evidence type="ECO:0000269" key="40">
    <source>
    </source>
</evidence>
<evidence type="ECO:0000269" key="41">
    <source>
    </source>
</evidence>
<evidence type="ECO:0000269" key="42">
    <source>
    </source>
</evidence>
<evidence type="ECO:0000269" key="43">
    <source>
    </source>
</evidence>
<evidence type="ECO:0000269" key="44">
    <source>
    </source>
</evidence>
<evidence type="ECO:0000269" key="45">
    <source ref="6"/>
</evidence>
<evidence type="ECO:0000303" key="46">
    <source>
    </source>
</evidence>
<evidence type="ECO:0000303" key="47">
    <source>
    </source>
</evidence>
<evidence type="ECO:0000303" key="48">
    <source>
    </source>
</evidence>
<evidence type="ECO:0000305" key="49"/>
<evidence type="ECO:0000305" key="50">
    <source>
    </source>
</evidence>
<evidence type="ECO:0000305" key="51">
    <source>
    </source>
</evidence>
<evidence type="ECO:0000305" key="52">
    <source>
    </source>
</evidence>
<evidence type="ECO:0000305" key="53">
    <source>
    </source>
</evidence>
<evidence type="ECO:0000305" key="54">
    <source>
    </source>
</evidence>
<evidence type="ECO:0000305" key="55">
    <source>
    </source>
</evidence>
<evidence type="ECO:0000305" key="56">
    <source>
    </source>
</evidence>
<evidence type="ECO:0000305" key="57">
    <source>
    </source>
</evidence>
<evidence type="ECO:0000305" key="58">
    <source>
    </source>
</evidence>
<evidence type="ECO:0000305" key="59">
    <source>
    </source>
</evidence>
<evidence type="ECO:0000305" key="60">
    <source>
    </source>
</evidence>
<evidence type="ECO:0000305" key="61">
    <source>
    </source>
</evidence>
<evidence type="ECO:0000305" key="62">
    <source>
    </source>
</evidence>
<evidence type="ECO:0000305" key="63">
    <source>
    </source>
</evidence>
<evidence type="ECO:0000305" key="64">
    <source>
    </source>
</evidence>
<evidence type="ECO:0000305" key="65">
    <source>
    </source>
</evidence>
<evidence type="ECO:0000305" key="66">
    <source>
    </source>
</evidence>
<evidence type="ECO:0000305" key="67">
    <source>
    </source>
</evidence>
<evidence type="ECO:0000305" key="68">
    <source>
    </source>
</evidence>
<evidence type="ECO:0000305" key="69">
    <source>
    </source>
</evidence>
<evidence type="ECO:0000305" key="70">
    <source>
    </source>
</evidence>
<evidence type="ECO:0000305" key="71">
    <source>
    </source>
</evidence>
<evidence type="ECO:0000305" key="72">
    <source>
    </source>
</evidence>
<evidence type="ECO:0007744" key="73">
    <source>
        <dbReference type="PDB" id="1XTF"/>
    </source>
</evidence>
<evidence type="ECO:0007744" key="74">
    <source>
        <dbReference type="PDB" id="1XTG"/>
    </source>
</evidence>
<evidence type="ECO:0007744" key="75">
    <source>
        <dbReference type="PDB" id="2VU9"/>
    </source>
</evidence>
<evidence type="ECO:0007744" key="76">
    <source>
        <dbReference type="PDB" id="2VUA"/>
    </source>
</evidence>
<evidence type="ECO:0007744" key="77">
    <source>
        <dbReference type="PDB" id="2W2D"/>
    </source>
</evidence>
<evidence type="ECO:0007744" key="78">
    <source>
        <dbReference type="PDB" id="3V0A"/>
    </source>
</evidence>
<evidence type="ECO:0007744" key="79">
    <source>
        <dbReference type="PDB" id="3V0B"/>
    </source>
</evidence>
<evidence type="ECO:0007744" key="80">
    <source>
        <dbReference type="PDB" id="3V0C"/>
    </source>
</evidence>
<evidence type="ECO:0007744" key="81">
    <source>
        <dbReference type="PDB" id="4JRA"/>
    </source>
</evidence>
<evidence type="ECO:0007744" key="82">
    <source>
        <dbReference type="PDB" id="5JLV"/>
    </source>
</evidence>
<evidence type="ECO:0007744" key="83">
    <source>
        <dbReference type="PDB" id="5JMC"/>
    </source>
</evidence>
<evidence type="ECO:0007744" key="84">
    <source>
        <dbReference type="PDB" id="5MK6"/>
    </source>
</evidence>
<evidence type="ECO:0007744" key="85">
    <source>
        <dbReference type="PDB" id="5MK7"/>
    </source>
</evidence>
<evidence type="ECO:0007744" key="86">
    <source>
        <dbReference type="PDB" id="5TPB"/>
    </source>
</evidence>
<evidence type="ECO:0007744" key="87">
    <source>
        <dbReference type="PDB" id="5TPC"/>
    </source>
</evidence>
<evidence type="ECO:0007829" key="88">
    <source>
        <dbReference type="PDB" id="6DKK"/>
    </source>
</evidence>
<evidence type="ECO:0007829" key="89">
    <source>
        <dbReference type="PDB" id="6MHJ"/>
    </source>
</evidence>
<evidence type="ECO:0007829" key="90">
    <source>
        <dbReference type="PDB" id="6XCB"/>
    </source>
</evidence>
<evidence type="ECO:0007829" key="91">
    <source>
        <dbReference type="PDB" id="6XCD"/>
    </source>
</evidence>
<evidence type="ECO:0007829" key="92">
    <source>
        <dbReference type="PDB" id="6XCE"/>
    </source>
</evidence>
<evidence type="ECO:0007829" key="93">
    <source>
        <dbReference type="PDB" id="6XCF"/>
    </source>
</evidence>
<evidence type="ECO:0007829" key="94">
    <source>
        <dbReference type="PDB" id="7KYF"/>
    </source>
</evidence>
<evidence type="ECO:0007829" key="95">
    <source>
        <dbReference type="PDB" id="7KYH"/>
    </source>
</evidence>
<gene>
    <name evidence="46" type="primary">botA</name>
    <name evidence="47" type="synonym">atx</name>
    <name evidence="48" type="synonym">bonT</name>
</gene>
<feature type="initiator methionine" description="Removed" evidence="26 39 45 52">
    <location>
        <position position="1"/>
    </location>
</feature>
<feature type="chain" id="PRO_0000444902" description="Botulinum neurotoxin type A">
    <location>
        <begin position="2"/>
        <end position="1296"/>
    </location>
</feature>
<feature type="chain" id="PRO_0000029211" description="Botulinum neurotoxin A light chain" evidence="39">
    <location>
        <begin position="2"/>
        <end position="448"/>
    </location>
</feature>
<feature type="chain" id="PRO_0000029212" description="Botulinum neurotoxin A heavy chain" evidence="39">
    <location>
        <begin position="449"/>
        <end position="1296"/>
    </location>
</feature>
<feature type="transmembrane region" description="Helical" evidence="1">
    <location>
        <begin position="627"/>
        <end position="647"/>
    </location>
</feature>
<feature type="transmembrane region" description="Helical" evidence="1">
    <location>
        <begin position="656"/>
        <end position="676"/>
    </location>
</feature>
<feature type="region of interest" description="Translocation domain (TD); not required to bind NTNHA" evidence="30 58">
    <location>
        <begin position="449"/>
        <end position="870"/>
    </location>
</feature>
<feature type="region of interest" description="Belt; not required for channel formation" evidence="64">
    <location>
        <begin position="492"/>
        <end position="545"/>
    </location>
</feature>
<feature type="region of interest" description="N-terminus of receptor binding domain (N-RBD)" evidence="58">
    <location>
        <begin position="871"/>
        <end position="1092"/>
    </location>
</feature>
<feature type="region of interest" description="C-terminus of receptor binding domain (C-RBD)" evidence="58">
    <location>
        <begin position="1093"/>
        <end position="1296"/>
    </location>
</feature>
<feature type="region of interest" description="Interaction with host ganglioside GT1b" evidence="19 37 55 75 86 87">
    <location>
        <begin position="1252"/>
        <end position="1253"/>
    </location>
</feature>
<feature type="short sequence motif" description="Host ganglioside-binding motif; interacts with GT1b" evidence="19 37 55 60 75 86 87">
    <location>
        <begin position="1264"/>
        <end position="1267"/>
    </location>
</feature>
<feature type="active site" description="Proton acceptor" evidence="2 51">
    <location>
        <position position="224"/>
    </location>
</feature>
<feature type="binding site" evidence="2 14 23 73 74 77 78 79">
    <location>
        <position position="223"/>
    </location>
    <ligand>
        <name>Zn(2+)</name>
        <dbReference type="ChEBI" id="CHEBI:29105"/>
        <note>catalytic</note>
    </ligand>
</feature>
<feature type="binding site" evidence="2 14 23 70 73 74 77 78 79">
    <location>
        <position position="227"/>
    </location>
    <ligand>
        <name>Zn(2+)</name>
        <dbReference type="ChEBI" id="CHEBI:29105"/>
        <note>catalytic</note>
    </ligand>
</feature>
<feature type="binding site" evidence="14 23 53 73 74 77 78 79">
    <location>
        <position position="262"/>
    </location>
    <ligand>
        <name>Zn(2+)</name>
        <dbReference type="ChEBI" id="CHEBI:29105"/>
        <note>catalytic</note>
    </ligand>
</feature>
<feature type="binding site" evidence="19 37 75 86 87">
    <location>
        <position position="1117"/>
    </location>
    <ligand>
        <name>a ganglioside GT1b (d18:1(4E))</name>
        <dbReference type="ChEBI" id="CHEBI:78452"/>
        <note>host ganglioside</note>
    </ligand>
</feature>
<feature type="binding site" evidence="19 37 55 75 86 87">
    <location>
        <position position="1203"/>
    </location>
    <ligand>
        <name>a ganglioside GT1b (d18:1(4E))</name>
        <dbReference type="ChEBI" id="CHEBI:78452"/>
        <note>host ganglioside</note>
    </ligand>
</feature>
<feature type="site" description="Transition state stabilizer" evidence="54">
    <location>
        <position position="363"/>
    </location>
</feature>
<feature type="site" description="Transition state stabilizer" evidence="54">
    <location>
        <position position="366"/>
    </location>
</feature>
<feature type="disulfide bond" description="Interchain (between light and heavy chains)" evidence="23 30 56 77 78 79 80">
    <location>
        <begin position="430"/>
        <end position="454"/>
    </location>
</feature>
<feature type="disulfide bond" evidence="80 85">
    <location>
        <begin position="1235"/>
        <end position="1280"/>
    </location>
</feature>
<feature type="sequence variant" description="In strain: 62A.">
    <original>V</original>
    <variation>A</variation>
    <location>
        <position position="27"/>
    </location>
</feature>
<feature type="mutagenesis site" description="Light chain has 5% cleavage activity on SNAP25. KM for SNAP25 is nearly wild-type." evidence="4">
    <original>E</original>
    <variation>D</variation>
    <location>
        <position position="224"/>
    </location>
</feature>
<feature type="mutagenesis site" description="Light chain no longer cleaves SNAP25, no effect on substrate or Zn(2+) binding." evidence="4">
    <original>E</original>
    <variation>Q</variation>
    <location>
        <position position="224"/>
    </location>
</feature>
<feature type="mutagenesis site" description="Light chain no longer cleaves SNAP25, not toxic in vitro or in vivo when reconstituted with heavy chain." evidence="41">
    <original>H</original>
    <variation>Y</variation>
    <location>
        <position position="227"/>
    </location>
</feature>
<feature type="mutagenesis site" description="Light chain has 20% cleavage activity on SNAP25, 40% decrease in Zn(2+)." evidence="7">
    <original>E</original>
    <variation>A</variation>
    <location>
        <position position="262"/>
    </location>
</feature>
<feature type="mutagenesis site" description="Light chain has 50% cleavage activity on SNAP25, no effect on Zn(2+) binding." evidence="7">
    <original>F</original>
    <variation>A</variation>
    <location>
        <position position="266"/>
    </location>
</feature>
<feature type="mutagenesis site" description="Wild-type KM for SNAP25, no protease activity, about 30% less Zn(2+)." evidence="8">
    <original>E</original>
    <variation>A</variation>
    <variation>Q</variation>
    <location>
        <position position="351"/>
    </location>
</feature>
<feature type="mutagenesis site" description="Wild-type KM for SNAP25, about 75-fold decrease in kcat, no effect on Zn(2+) binding." evidence="8">
    <original>R</original>
    <variation>A</variation>
    <variation>H</variation>
    <variation>K</variation>
    <location>
        <position position="363"/>
    </location>
</feature>
<feature type="mutagenesis site" description="Light chain has 40% cleavage activity on SNAP25, 30% decrease in Zn(2+)." evidence="7">
    <original>Y</original>
    <variation>A</variation>
    <location>
        <position position="366"/>
    </location>
</feature>
<feature type="mutagenesis site" description="About wild-type KM for SNAP25, 35-fold decrease in kcat, no effect on Zn(2+) binding." evidence="8">
    <original>Y</original>
    <variation>F</variation>
    <location>
        <position position="366"/>
    </location>
</feature>
<feature type="mutagenesis site" description="Reduced toxicity." evidence="30">
    <original>RLLSTFTEYIK</original>
    <variation>ALLSTFTPYIP</variation>
    <location>
        <begin position="861"/>
        <end position="871"/>
    </location>
</feature>
<feature type="mutagenesis site" description="Reduced toxicity." evidence="30">
    <original>LLSTFT</original>
    <variation>KESTFK</variation>
    <location>
        <begin position="862"/>
        <end position="867"/>
    </location>
</feature>
<feature type="mutagenesis site" description="Whole toxin has 50-fold reduction in toxicity, almost no binding of RBD to neurons." evidence="35">
    <original>F</original>
    <variation>G</variation>
    <location>
        <position position="953"/>
    </location>
</feature>
<feature type="mutagenesis site" description="Whole toxin is non-toxic, almost no binding of RBD to neurons." evidence="35">
    <original>F</original>
    <variation>R</variation>
    <location>
        <position position="953"/>
    </location>
</feature>
<feature type="mutagenesis site" description="Decreased binding of NTNHA by receptor-binding domain (RBD) at pH 7.5." evidence="30">
    <original>E</original>
    <variation>A</variation>
    <variation>Q</variation>
    <location>
        <position position="982"/>
    </location>
</feature>
<feature type="mutagenesis site" description="Decreased binding of NTNHA by RBD at pH 6.0, none at pH 7.5." evidence="30">
    <original>K</original>
    <variation>A</variation>
    <location>
        <position position="1000"/>
    </location>
</feature>
<feature type="mutagenesis site" description="Decreased binding of NTNHA by RBD at pH 7.5." evidence="30">
    <original>D</original>
    <variation>A</variation>
    <variation>N</variation>
    <location>
        <position position="1037"/>
    </location>
</feature>
<feature type="mutagenesis site" description="Whole toxin has reduced toxicity, dramatically reduced binding of RBD to neurons." evidence="35">
    <original>H</original>
    <variation>G</variation>
    <variation>R</variation>
    <location>
        <position position="1064"/>
    </location>
</feature>
<feature type="mutagenesis site" description="Decreased binding of NTNHA by RBD at pH 7.5." evidence="30">
    <original>D</original>
    <variation>A</variation>
    <location>
        <position position="1118"/>
    </location>
</feature>
<feature type="mutagenesis site" description="No binding of RBD to neurons. Loss of binding to SV2C." evidence="33 35">
    <original>TT</original>
    <variation>AA</variation>
    <location>
        <begin position="1145"/>
        <end position="1146"/>
    </location>
</feature>
<feature type="mutagenesis site" description="Decreased binding of RBD to SV2C, substantial binding to neurons." evidence="33 35">
    <original>R</original>
    <variation>E</variation>
    <location>
        <position position="1156"/>
    </location>
</feature>
<feature type="mutagenesis site" description="Decreased binding of NTNHA by RBD at pH 7.5." evidence="30">
    <original>D</original>
    <variation>A</variation>
    <location>
        <position position="1171"/>
    </location>
</feature>
<feature type="mutagenesis site" description="Strongly reduced toxicity, heavy chain has very strongly reduced binding to synaptosomes, decreased binding to gangioside GT1b." evidence="12">
    <original>E</original>
    <variation>L</variation>
    <location>
        <position position="1203"/>
    </location>
</feature>
<feature type="mutagenesis site" description="Strongly reduced toxicity, heavy chain has very strongly reduced binding to synaptosomes, decrease in ganglioside GT1b binding." evidence="12">
    <original>H</original>
    <variation>A</variation>
    <location>
        <position position="1253"/>
    </location>
</feature>
<feature type="mutagenesis site" description="Heavy chain has very strongly reduced binding to synaptosomes, binds much less GT1b. RBD protects against neurotoxin less well than wild-type." evidence="12 25">
    <original>H</original>
    <variation>W</variation>
    <location>
        <position position="1253"/>
    </location>
</feature>
<feature type="mutagenesis site" description="Reduced toxicity, heavy chain has strongly reduced binding to synaptosomes, heavy chain binds less GT1b." evidence="12">
    <original>S</original>
    <variation>A</variation>
    <location>
        <position position="1264"/>
    </location>
</feature>
<feature type="mutagenesis site" description="Whole RBD does not protect against neurotoxin, no effect on epithelial cell passage; can be used as a vaccine." evidence="25">
    <original>WY</original>
    <variation>LS</variation>
    <location>
        <begin position="1266"/>
        <end position="1267"/>
    </location>
</feature>
<feature type="mutagenesis site" description="Nearly complete loss of toxicity, heavy chain has very strongly reduced binding to synaptosomes, binds much less GT1b. Heavy chain no longer inhibits whole-toxin uptake and toxicity. RBD protects against neurotoxin considerably less well than wild-type." evidence="12 24 25">
    <original>W</original>
    <variation>L</variation>
    <location>
        <position position="1266"/>
    </location>
</feature>
<feature type="mutagenesis site" description="Nearly complete loss of toxicity, heavy chain has very strongly reduced binding to synaptosomes, binds much less GT1b." evidence="12">
    <original>Y</original>
    <variation>F</variation>
    <location>
        <position position="1267"/>
    </location>
</feature>
<feature type="mutagenesis site" description="Nearly complete loss of toxicity, heavy chain has very strongly reduced binding to synaptosomes, binds much less GT1b. RBD protects against neurotoxin considerably less well than wild-type." evidence="12 25">
    <original>Y</original>
    <variation>S</variation>
    <location>
        <position position="1267"/>
    </location>
</feature>
<feature type="mutagenesis site" description="Whole toxin has very strongly reduced toxicity, almost no binding of RBD to neurons." evidence="35">
    <original>G</original>
    <variation>Q</variation>
    <location>
        <position position="1292"/>
    </location>
</feature>
<feature type="mutagenesis site" description="Nearly complete loss of toxicity, almost no binding of RBD to neurons." evidence="35">
    <original>G</original>
    <variation>R</variation>
    <location>
        <position position="1292"/>
    </location>
</feature>
<feature type="mutagenesis site" description="Decreased binding of RBD to SV2C, substantial binding to neurons." evidence="33">
    <original>R</original>
    <variation>A</variation>
    <location>
        <position position="1294"/>
    </location>
</feature>
<feature type="mutagenesis site" description="Decreased binding of RBD to SV2C, substantial binding to neurons." evidence="35">
    <original>R</original>
    <variation>S</variation>
    <location>
        <position position="1294"/>
    </location>
</feature>
<feature type="sequence conflict" description="In Ref. 1; CAA36289." evidence="49" ref="1">
    <original>P</original>
    <variation>Q</variation>
    <location>
        <position position="2"/>
    </location>
</feature>
<feature type="sequence conflict" description="In Ref. 9; AA sequence." evidence="49" ref="9">
    <original>E</original>
    <variation>P</variation>
    <location>
        <position position="480"/>
    </location>
</feature>
<feature type="strand" evidence="95">
    <location>
        <begin position="10"/>
        <end position="12"/>
    </location>
</feature>
<feature type="strand" evidence="93">
    <location>
        <begin position="16"/>
        <end position="23"/>
    </location>
</feature>
<feature type="turn" evidence="93">
    <location>
        <begin position="25"/>
        <end position="27"/>
    </location>
</feature>
<feature type="strand" evidence="93">
    <location>
        <begin position="33"/>
        <end position="39"/>
    </location>
</feature>
<feature type="strand" evidence="93">
    <location>
        <begin position="42"/>
        <end position="48"/>
    </location>
</feature>
<feature type="strand" evidence="94">
    <location>
        <begin position="51"/>
        <end position="53"/>
    </location>
</feature>
<feature type="helix" evidence="90">
    <location>
        <begin position="64"/>
        <end position="66"/>
    </location>
</feature>
<feature type="turn" evidence="94">
    <location>
        <begin position="68"/>
        <end position="70"/>
    </location>
</feature>
<feature type="turn" evidence="93">
    <location>
        <begin position="75"/>
        <end position="78"/>
    </location>
</feature>
<feature type="helix" evidence="93">
    <location>
        <begin position="81"/>
        <end position="99"/>
    </location>
</feature>
<feature type="helix" evidence="93">
    <location>
        <begin position="102"/>
        <end position="113"/>
    </location>
</feature>
<feature type="strand" evidence="93">
    <location>
        <begin position="126"/>
        <end position="128"/>
    </location>
</feature>
<feature type="helix" evidence="93">
    <location>
        <begin position="131"/>
        <end position="133"/>
    </location>
</feature>
<feature type="strand" evidence="93">
    <location>
        <begin position="134"/>
        <end position="138"/>
    </location>
</feature>
<feature type="strand" evidence="93">
    <location>
        <begin position="144"/>
        <end position="148"/>
    </location>
</feature>
<feature type="strand" evidence="93">
    <location>
        <begin position="150"/>
        <end position="155"/>
    </location>
</feature>
<feature type="strand" evidence="95">
    <location>
        <begin position="157"/>
        <end position="161"/>
    </location>
</feature>
<feature type="strand" evidence="93">
    <location>
        <begin position="164"/>
        <end position="166"/>
    </location>
</feature>
<feature type="turn" evidence="93">
    <location>
        <begin position="175"/>
        <end position="177"/>
    </location>
</feature>
<feature type="strand" evidence="93">
    <location>
        <begin position="184"/>
        <end position="187"/>
    </location>
</feature>
<feature type="strand" evidence="93">
    <location>
        <begin position="192"/>
        <end position="196"/>
    </location>
</feature>
<feature type="helix" evidence="93">
    <location>
        <begin position="200"/>
        <end position="203"/>
    </location>
</feature>
<feature type="helix" evidence="93">
    <location>
        <begin position="217"/>
        <end position="232"/>
    </location>
</feature>
<feature type="strand" evidence="93">
    <location>
        <begin position="242"/>
        <end position="244"/>
    </location>
</feature>
<feature type="helix" evidence="93">
    <location>
        <begin position="249"/>
        <end position="253"/>
    </location>
</feature>
<feature type="strand" evidence="93">
    <location>
        <begin position="257"/>
        <end position="259"/>
    </location>
</feature>
<feature type="helix" evidence="93">
    <location>
        <begin position="260"/>
        <end position="266"/>
    </location>
</feature>
<feature type="helix" evidence="93">
    <location>
        <begin position="268"/>
        <end position="273"/>
    </location>
</feature>
<feature type="helix" evidence="93">
    <location>
        <begin position="276"/>
        <end position="299"/>
    </location>
</feature>
<feature type="strand" evidence="93">
    <location>
        <begin position="302"/>
        <end position="308"/>
    </location>
</feature>
<feature type="helix" evidence="93">
    <location>
        <begin position="310"/>
        <end position="321"/>
    </location>
</feature>
<feature type="strand" evidence="91">
    <location>
        <begin position="327"/>
        <end position="329"/>
    </location>
</feature>
<feature type="helix" evidence="93">
    <location>
        <begin position="335"/>
        <end position="346"/>
    </location>
</feature>
<feature type="helix" evidence="93">
    <location>
        <begin position="351"/>
        <end position="358"/>
    </location>
</feature>
<feature type="strand" evidence="93">
    <location>
        <begin position="366"/>
        <end position="368"/>
    </location>
</feature>
<feature type="strand" evidence="93">
    <location>
        <begin position="372"/>
        <end position="375"/>
    </location>
</feature>
<feature type="turn" evidence="93">
    <location>
        <begin position="381"/>
        <end position="383"/>
    </location>
</feature>
<feature type="turn" evidence="93">
    <location>
        <begin position="386"/>
        <end position="388"/>
    </location>
</feature>
<feature type="strand" evidence="92">
    <location>
        <begin position="393"/>
        <end position="395"/>
    </location>
</feature>
<feature type="helix" evidence="94">
    <location>
        <begin position="396"/>
        <end position="398"/>
    </location>
</feature>
<feature type="turn" evidence="95">
    <location>
        <begin position="399"/>
        <end position="401"/>
    </location>
</feature>
<feature type="helix" evidence="93">
    <location>
        <begin position="402"/>
        <end position="404"/>
    </location>
</feature>
<feature type="turn" evidence="93">
    <location>
        <begin position="406"/>
        <end position="409"/>
    </location>
</feature>
<feature type="helix" evidence="93">
    <location>
        <begin position="410"/>
        <end position="412"/>
    </location>
</feature>
<feature type="strand" evidence="93">
    <location>
        <begin position="414"/>
        <end position="418"/>
    </location>
</feature>
<feature type="turn" evidence="92">
    <location>
        <begin position="420"/>
        <end position="422"/>
    </location>
</feature>
<feature type="strand" evidence="88">
    <location>
        <begin position="548"/>
        <end position="550"/>
    </location>
</feature>
<feature type="helix" evidence="88">
    <location>
        <begin position="551"/>
        <end position="555"/>
    </location>
</feature>
<feature type="strand" evidence="88">
    <location>
        <begin position="562"/>
        <end position="564"/>
    </location>
</feature>
<feature type="strand" evidence="88">
    <location>
        <begin position="567"/>
        <end position="570"/>
    </location>
</feature>
<feature type="helix" evidence="88">
    <location>
        <begin position="572"/>
        <end position="576"/>
    </location>
</feature>
<feature type="strand" evidence="88">
    <location>
        <begin position="581"/>
        <end position="583"/>
    </location>
</feature>
<feature type="helix" evidence="88">
    <location>
        <begin position="588"/>
        <end position="594"/>
    </location>
</feature>
<feature type="turn" evidence="88">
    <location>
        <begin position="600"/>
        <end position="602"/>
    </location>
</feature>
<feature type="helix" evidence="88">
    <location>
        <begin position="603"/>
        <end position="619"/>
    </location>
</feature>
<feature type="strand" evidence="88">
    <location>
        <begin position="622"/>
        <end position="625"/>
    </location>
</feature>
<feature type="strand" evidence="88">
    <location>
        <begin position="627"/>
        <end position="633"/>
    </location>
</feature>
<feature type="strand" evidence="88">
    <location>
        <begin position="636"/>
        <end position="639"/>
    </location>
</feature>
<feature type="helix" evidence="88">
    <location>
        <begin position="643"/>
        <end position="645"/>
    </location>
</feature>
<feature type="strand" evidence="88">
    <location>
        <begin position="646"/>
        <end position="649"/>
    </location>
</feature>
<feature type="strand" evidence="88">
    <location>
        <begin position="653"/>
        <end position="657"/>
    </location>
</feature>
<feature type="strand" evidence="88">
    <location>
        <begin position="662"/>
        <end position="668"/>
    </location>
</feature>
<feature type="helix" evidence="89">
    <location>
        <begin position="679"/>
        <end position="685"/>
    </location>
</feature>
<feature type="helix" evidence="88">
    <location>
        <begin position="688"/>
        <end position="719"/>
    </location>
</feature>
<feature type="helix" evidence="88">
    <location>
        <begin position="721"/>
        <end position="751"/>
    </location>
</feature>
<feature type="helix" evidence="88">
    <location>
        <begin position="756"/>
        <end position="760"/>
    </location>
</feature>
<feature type="helix" evidence="88">
    <location>
        <begin position="766"/>
        <end position="798"/>
    </location>
</feature>
<feature type="helix" evidence="88">
    <location>
        <begin position="800"/>
        <end position="824"/>
    </location>
</feature>
<feature type="turn" evidence="88">
    <location>
        <begin position="827"/>
        <end position="832"/>
    </location>
</feature>
<feature type="helix" evidence="88">
    <location>
        <begin position="834"/>
        <end position="845"/>
    </location>
</feature>
<feature type="helix" evidence="88">
    <location>
        <begin position="853"/>
        <end position="856"/>
    </location>
</feature>
<feature type="helix" evidence="88">
    <location>
        <begin position="861"/>
        <end position="868"/>
    </location>
</feature>
<comment type="function">
    <molecule>Botulinum neurotoxin type A</molecule>
    <text evidence="9 13 15 16 17 20 21 24 27 28 32 35 41">Botulinum toxin causes flaccid paralysis by inhibiting neurotransmitter (acetylcholine) release from the presynaptic membranes of nerve terminals of the eukaryotic host skeletal and autonomic nervous system, with frequent heart or respiratory failure (PubMed:15394302, PubMed:7578132). Precursor of botulinum neurotoxin A which has 2 coreceptors; complex polysialylated gangliosides found on neural tissue and specific membrane-anchored proteins of synaptic vesicles. Receptor proteins are exposed on host presynaptic cell membrane during neurotransmitter release, when the toxin heavy chain (HC) binds to them. Upon synaptic vesicle recycling the toxin is taken up via the endocytic pathway. When the pH of the toxin-containing endosome drops a structural rearrangement occurs so that the N-terminus of the HC forms pores that allows the light chain (LC) to translocate into the cytosol (PubMed:17666397, PubMed:19096517). Once in the cytosol the disulfide bond linking the 2 subunits is reduced and LC cleaves its target protein on synaptic vesicles, preventing their fusion with the cytoplasmic membrane and thus neurotransmitter release. Toxin activity requires polysialylated gangliosides; GT1b supports activity better than GD1a (PubMed:12089155). Binds to host peripheral neuronal presynaptic membranes via the synaptic vesicle glycoproteins SV2A, SV2B and SV2C (PubMed:16543415). It binds directly to the largest lumenal (intravesicular) loop of SV2A, SV2B and SV2C that is transiently exposed outside of cells during exocytosis; gangliosides enhance binding (PubMed:16543415, PubMed:16545378, PubMed:18815274). Recognizes an N-linked glycan on SV2 proteins (PubMed:18815274, PubMed:27294781). May also use FGFR3 as a receptor (PubMed:23696738). Toxin uptake into neural cells requires stimulation (incubation with K(+) to stimulate receptor exposure) to be internalized by receptor-mediated endocytosis (PubMed:16543415, PubMed:19650874, PubMed:21632541, PubMed:21832053). Subsequently the toxin colocalizes with its receptor in host cells (PubMed:16543415, PubMed:19650874). Toxin uptake can be blocked by the appropriate SV2 protein fragments in cell culture (PubMed:16543415).</text>
</comment>
<comment type="function">
    <molecule>Botulinum neurotoxin A light chain</molecule>
    <text evidence="4 6 7 8 14 17 41 43 44 59">Has proteolytic activity (PubMed:7578132). After translocation into the eukaryotic host cytosol LC hydrolyzes the '197-Gln-|-Arg-198' bond in SNAP25, blocking neurotransmitter release (PubMed:10694409, PubMed:11700044, PubMed:11827515, PubMed:19351593, PubMed:7578132, PubMed:8243676, PubMed:9886085). Recognizes the '146-Met--Gly-155' region of SNAP25, which confers substrate specificity (PubMed:15592454, PubMed:9886085). Hydrolyzes the '202-Thr-|-Arg-203' bond of mouse SNAP23, but not in human which has a different sequence (PubMed:9886085). Reduction of the interchain disulfide bond occurs in the host cytosol and probably prevents retrotranslocation into the synaptic vesicle (PubMed:17666397). Has slow (occurs over 4 weeks) autocatalytic cleavage, however it is not clear if this is physiologically relevant (PubMed:11565902).</text>
</comment>
<comment type="function">
    <molecule>Botulinum neurotoxin A heavy chain</molecule>
    <text evidence="3 12 16 17 19 21 22 23 24 25 29 30 31 33 35 36 37 40 57 67">Responsible for host epithelial cell transcytosis, host nerve cell targeting and translocation of botulinum neurotoxin A light chain (LC) into host cytosol. Composed of 3 subdomains; the translocation domain (TD), and N-terminus and C-terminus of the receptor-binding domain (RBD) (PubMed:19096517). The RBD is responsible for binding to host epithelial cells and transcytosis across them; this uses different receptors than those on nerve cells (PubMed:21106906). RBD is also responsible for adherence of toxin to host nerve cell surface; HC alone prevents uptake of whole toxin by neural cells, and delays paralysis onset by 75% (PubMed:10413679, PubMed:6694738). Isolated RBD also delays paralysis onset (PubMed:21106906). The N-terminus of the RBD binds to phosphatidylinositol, which might play a role in membrane-binding (PubMed:19161982). Binds to host protein receptor synaptic vesicle glycoproteins SV2A, SV2B and SV2C via lumenal loop 4 (PubMed:16545378, PubMed:19650874, PubMed:24240280, PubMed:27294781, PubMed:27313224, PubMed:6370252). Binding can be inhibited by protein fragments from either the HC or SV2C (PubMed:24240280). Isolated HC significantly decreases uptake and toxicity of whole BoNT/A, but also interferes with uptake of BoNT/E and to a lesser extent BoNT/F (PubMed:19650874). The RBD recognizes the N-linked glycan on 'Asn-559' of SV2A, SV2B and SV2C; hydrogen-bonding occurs via 10 well-defined water molecules and stacking of hydrophobic residues (PubMed:27294781). Binds one host GT1b ganglioside, which serves as a coreceptor (PubMed:14731268, PubMed:18704164, PubMed:27958736). Modeling shows the HC can bind both coreceptors (a ganglioside and SV2 protein) simultaneously at different sites (PubMed:24240280). Crystals of the RBD with a GT1b analog can be grown at pH 5.5, indicating the toxin-ganglioside complex could be stable within the endosome (PubMed:18704164). Isolated RBD binds NTNHA (a bacterial protein that protects toxin) with high affinity at pH 6.0 but not at pH 7.5 (PubMed:22363010). The N-terminal belt (residues 449-545) wraps around the perimeter of the LC, probably protecting Zn(2+) in the active site; it is not required for channel formation by the TD domain but may serve to prevent premature LC dissociation from the translocation channel and to protect toxin prior to translocation (PubMed:17907800, PubMed:19351593, PubMed:22158863). The isolated TD forms transmembrane channels of about 15 Angstroms in the absence of a pH gradient; LC translocation requires a pH and redox gradient (pH 5.0/oxidizing in the cis compartment, pH 7.0/reducing in the trans compartment), LC does not unfold unless the cis pH is 6.0 or less (PubMed:17666397, PubMed:19096517, PubMed:2446925). Pores are presumably made by 1-2 toxin molecules (PubMed:23471747). While interaction with the RBD modulates the pH threshold for membrane insertion, the RBD is not essential for toxin degradation of SNAP25 in neural cells (PubMed:19096517).</text>
</comment>
<comment type="catalytic activity">
    <reaction evidence="4 41 43 44">
        <text>Limited hydrolysis of proteins of the neuroexocytosis apparatus, synaptobrevins, SNAP25 or syntaxin. No detected action on small molecule substrates.</text>
        <dbReference type="EC" id="3.4.24.69"/>
    </reaction>
</comment>
<comment type="cofactor">
    <cofactor evidence="6 7 10 14 23 30 41">
        <name>Zn(2+)</name>
        <dbReference type="ChEBI" id="CHEBI:29105"/>
    </cofactor>
    <text evidence="7 10 14 23 30">Binds 1 zinc ion per subunit (PubMed:11700044, PubMed:1429690, PubMed:15592454, PubMed:19351593, PubMed:22363010).</text>
</comment>
<comment type="activity regulation">
    <text evidence="28 40">Toxin internalization is inhibited by azide or dinitrophenol or at 4 degrees Celsius (PubMed:6694738). Dynamin (DNM) inhibitors abolish toxin uptake (PubMed:21832053).</text>
</comment>
<comment type="biophysicochemical properties">
    <kinetics>
        <KM evidence="4">41 uM for purified SNAP25 with isolated botulinum neurotoxin A light chain</KM>
        <KM evidence="8">9.8 uM for purified SNAP25 with isolated botulinum neurotoxin A light chain</KM>
        <text evidence="4 8">kcat is 140 min(-1) (PubMed:10694409). kcat is 1026 (-1) (PubMed:11827515).</text>
    </kinetics>
</comment>
<comment type="subunit">
    <text evidence="15 16 20 24 30 33 36 41 65">Heterodimer; disulfide-linked heterodimer of a light chain (LC) and heavy chain (HC) (PubMed:7578132). Interacts with glycosylated host synaptic vesicle glycoproteins SV2A, SV2B and SV2C which serve as coreceptors (PubMed:16543415, PubMed:18815274, PubMed:19650874, PubMed:24240280, PubMed:27313224). Glycosylation of 'Asn-559' in SV2C contributes a 12-fold increase in affinity to this interaction (PubMed:27313224). Depolarization of target tissue with high levels of K(+) leads to greater levels of receptor exposure (PubMed:16543415). In vitro addition of gangliosides increases SV2-toxin interaction (PubMed:16543415). Forms a highly interlocked heterodimer with NTNHA at pH 6.0 but not at pH 7.5 called the minimally functional progenitor toxin complex (M-PTC) (PubMed:22363010). The PTC is thought to protect toxin in the host acidic gastrointestinal tract, facilitate transcytosis across the intestinal barrier and release at neutral pH as is found in the bloodstream (PubMed:22363010).</text>
</comment>
<comment type="interaction">
    <interactant intactId="EBI-8178893">
        <id>P0DPI0</id>
    </interactant>
    <interactant intactId="EBI-466194">
        <id>Q02563</id>
        <label>Sv2a</label>
    </interactant>
    <organismsDiffer>true</organismsDiffer>
    <experiments>2</experiments>
</comment>
<comment type="interaction">
    <interactant intactId="EBI-8178893">
        <id>P0DPI0</id>
    </interactant>
    <interactant intactId="EBI-16081469">
        <id>Q496J9</id>
        <label>SV2C</label>
    </interactant>
    <organismsDiffer>true</organismsDiffer>
    <experiments>4</experiments>
</comment>
<comment type="interaction">
    <interactant intactId="EBI-8178893">
        <id>P0DPI0</id>
    </interactant>
    <interactant intactId="EBI-8178859">
        <id>Q9Z2I6</id>
        <label>Sv2c</label>
    </interactant>
    <organismsDiffer>true</organismsDiffer>
    <experiments>12</experiments>
</comment>
<comment type="subcellular location">
    <molecule>Botulinum neurotoxin type A</molecule>
    <subcellularLocation>
        <location evidence="42">Secreted</location>
    </subcellularLocation>
    <subcellularLocation>
        <location evidence="42">Secreted</location>
        <location evidence="42">Cell wall</location>
    </subcellularLocation>
    <subcellularLocation>
        <location evidence="40">Host synapse</location>
        <location evidence="40">Host presynaptic cell membrane</location>
    </subcellularLocation>
    <text evidence="40 42">Whole toxin may be released from the bacteria during cell wall exfoliation (PubMed:7592120). There are estimated to be 150-500 toxin molecules per um(2) of non-myelinated mouse hemidiaphragm nerve membrane (PubMed:6694738). In mouse hemidiaphragm binds only to nerve terminals, and not to muscle, blood vessels, connective tissue Schwann cells or myelin, toxin can be internalized by this preparation (PubMed:6694738).</text>
</comment>
<comment type="subcellular location">
    <molecule>Botulinum neurotoxin A light chain</molecule>
    <subcellularLocation>
        <location evidence="39">Secreted</location>
    </subcellularLocation>
    <subcellularLocation>
        <location evidence="70 71 72">Host cytoplasm</location>
        <location evidence="70 71 72">Host cytosol</location>
    </subcellularLocation>
</comment>
<comment type="subcellular location">
    <molecule>Botulinum neurotoxin A heavy chain</molecule>
    <subcellularLocation>
        <location evidence="39">Secreted</location>
    </subcellularLocation>
    <subcellularLocation>
        <location evidence="40 50">Host synapse</location>
        <location evidence="40 50">Host presynaptic cell membrane</location>
    </subcellularLocation>
    <subcellularLocation>
        <location evidence="31 50 62 63 66 69">Host cytoplasmic vesicle</location>
        <location evidence="31 50 62 63 66 69">Host secretory vesicle</location>
        <location evidence="31 50 62 63 66 69">Host synaptic vesicle membrane</location>
        <topology evidence="56 58 67">Multi-pass membrane protein</topology>
    </subcellularLocation>
    <text evidence="27 28 31 33">Whole toxin may be released from the bacteria during cell wall exfoliation (PubMed:7592120). Colocalizes with its receptor SV2C (synaptic vesicle glycoprotein 2C) and VGAT (vesicular inhibitory amino acid transporter) in neurons (PubMed:24240280). In neurons HC colocalizes with synaptophysin or VAMP2 probably in synaptic vesicles, a portion also colocalizes with RAB5 and may be in synaptic vesicle protein sorting endosomes (PubMed:21632541, PubMed:21832053). Therefore there may be more than one uptake pathway at nerve terminals. Uptake of HC and whole toxin is slowed by dynamin inhibitors (PubMed:21832053). 1-2 molecules of HC are found in the host synaptic vesicle lumen, uptake and subsequent release of LC is very rapid (PubMed:21832053, PubMed:23471747).</text>
</comment>
<comment type="induction">
    <text evidence="42">In cultured bacteria, first detected in late exponential growth (17 hours), reaches maximal levels at 24-25 hours and remains nearly constant for 5 days (at protein level).</text>
</comment>
<comment type="domain">
    <molecule>Botulinum neurotoxin A light chain</molecule>
    <text evidence="41">Has protease activity (PubMed:7578132).</text>
</comment>
<comment type="domain">
    <molecule>Botulinum neurotoxin A heavy chain</molecule>
    <text evidence="17 18 21 23 30 34 57">Has 3 functional domains; the translocation domain (TD) and the receptor-binding domain (RBD) which is further subdivided into N- and C-terminal domains (N-RBD and C-RBD). Upon trypsin digestion the isolated TD forms channels in bilayers when the cis side is acidic/oxidizing and the trans side is pH 7.0/reducing (PubMed:17666397, PubMed:19096517, PubMed:2446925). The RBD rotates 140 degrees around the TD in the presence of NTNHA (PubMed:22363010). The 3 major domains each serve as a chaperone for the other 2 to ensure they act only in the correct host cell context (PubMed:19096517). In BoNT/A structures the LC is separated from the RBD by the TD; the belt wraps around the perimeter of the LC, protecting Zn(2+) in the active site (PubMed:18032388, PubMed:19351593, PubMed:22363010). The belt region (449-545) may be a pseudosubstrate inhibitor which serves as an intramolecular chaperone for the LC prior to its translocation into the host cytosol (PubMed:17907800).</text>
</comment>
<comment type="PTM">
    <text evidence="26">In a bacterial culture the precursor chain is initally cleaved on the amino side of Gly-445 and is processed more slowly between Lys-448 and Ala-449 to give the final mature heavy chain sequence.</text>
</comment>
<comment type="PTM">
    <molecule>Botulinum neurotoxin A light chain</molecule>
    <text evidence="6">Has slow autocatalytic activity, cleaves 250-Tyr-Tyr-251, 266-Phe-Gly-267, 419-Phe-Thr-420, 423-Phe-Glu-424, 430-Cys-Val-431, 432-Arg-Gly-433, 438-Lys-Thr-439, and probably 429-Leu-Cys-430 over a period of 4 weeks. Catalysis of the '197-Gln-|-Arg-198' bond in SNAP25 is estimated to be 10(5) more efficient than autocatalysis, leaving the physiological importance of autocatalysis in doubt (PubMed:11565902).</text>
</comment>
<comment type="PTM">
    <molecule>Botulinum neurotoxin A light chain</molecule>
    <text evidence="38">Ubiquitinated by host HECD2. Deubiquitination by host VCPIP1 prevents degradation by the proteasome.</text>
</comment>
<comment type="biotechnology">
    <text evidence="63">Dynamin inhibitors slow toxin uptake by nerve cells, and might be used to prolong the treatment window for antitoxins.</text>
</comment>
<comment type="biotechnology">
    <text evidence="5 23">Replacement of the RBD by other proteins (such as wheat germ agglutinin) allows the rest of the toxin to be taken up by other cell types, and can be used for investigating synaptic vesicle docking-dependent processes in BoNT resistant cells (PubMed:10768948). LC retains protease activity (PubMed:10768948, PubMed:19351593).</text>
</comment>
<comment type="biotechnology">
    <text evidence="25">Isolated receptor-binding domain (RBD) can be used as a vaccine; a mutated form that is transcytosed into the general circulation but does not enter nerve cells (Leu-1266-1267-Ser) is as efficient as wild-type RBD (PubMed:21106906).</text>
</comment>
<comment type="pharmaceutical">
    <text evidence="68">Available under the name Botox (onabotulinumtoxinA, Allergan), Dysport (abobotulinumtoxinA, Ipsen Biopharmaceuticals) and Xeomin (incobotulinumtoxinA, Merz Pharmaceuticals) for the treatment of strabismus and blepharospasm associated with dystonia and cervical dystonia. Also used for the treatment of hemifacial spasm and a number of other neurological disorders characterized by abnormal muscle contraction. It is also used cosmetically to smooth facial wrinkles.</text>
</comment>
<comment type="miscellaneous">
    <text evidence="49">There are seven antigenically distinct forms of botulinum neurotoxin: Types A, B, C, D, E, F, and G; new subtypes are quite frequent.</text>
</comment>
<comment type="miscellaneous">
    <text evidence="11">Types A, B and E are the most frequent cause of adult human foodborne botulism; type A is the most severe, while type E has the shortest incubation period (PubMed:1431246).</text>
</comment>
<comment type="miscellaneous">
    <text evidence="26 39">Neurotoxin type A is released from bacteria in the two-chain form (PubMed:2126206, PubMed:6370252).</text>
</comment>
<comment type="miscellaneous">
    <text evidence="61">Botulism poisoning is usually food-borne, either by ingesting toxin or bacterial-contaminated food, or less frequently by inhalation poisoning. In both cases the neurotoxin binds to the apical surface of epithelial cells in the gut or airway. Toxin undergoes receptor-mediated endocytosis (using a different receptor than on target nerve cells), transcytosis across the epithelial cells and release into the general circulation. Once in the general circulation it binds to its target cells.</text>
</comment>
<comment type="similarity">
    <text evidence="49">Belongs to the peptidase M27 family.</text>
</comment>
<comment type="caution">
    <text evidence="16">Contradictory results show that only SV2C is the receptor; in these experiments gangliosides do not improve toxin-coreceptor interaction (PubMed:16545378).</text>
</comment>
<comment type="online information" name="BOTOX product information Web site">
    <link uri="https://www.botox.com/"/>
</comment>
<comment type="online information" name="Protein Spotlight">
    <link uri="https://www.proteinspotlight.org/back_issues/019"/>
    <text>From sausages to wrinkles - Issue 19 of February 2002</text>
</comment>
<comment type="online information" name="BotDB - A Database Resource for Clostridial Neurotoxins">
    <link uri="https://botdb.abcc.ncifcrf.gov/"/>
</comment>
<keyword id="KW-0002">3D-structure</keyword>
<keyword id="KW-0134">Cell wall</keyword>
<keyword id="KW-0903">Direct protein sequencing</keyword>
<keyword id="KW-1015">Disulfide bond</keyword>
<keyword id="KW-1032">Host cell membrane</keyword>
<keyword id="KW-1035">Host cytoplasm</keyword>
<keyword id="KW-1036">Host cytoplasmic vesicle</keyword>
<keyword id="KW-1043">Host membrane</keyword>
<keyword id="KW-1051">Host synapse</keyword>
<keyword id="KW-0378">Hydrolase</keyword>
<keyword id="KW-0446">Lipid-binding</keyword>
<keyword id="KW-0472">Membrane</keyword>
<keyword id="KW-0479">Metal-binding</keyword>
<keyword id="KW-0482">Metalloprotease</keyword>
<keyword id="KW-0528">Neurotoxin</keyword>
<keyword id="KW-0582">Pharmaceutical</keyword>
<keyword id="KW-0645">Protease</keyword>
<keyword id="KW-0964">Secreted</keyword>
<keyword id="KW-0800">Toxin</keyword>
<keyword id="KW-0812">Transmembrane</keyword>
<keyword id="KW-1133">Transmembrane helix</keyword>
<keyword id="KW-0832">Ubl conjugation</keyword>
<keyword id="KW-0843">Virulence</keyword>
<keyword id="KW-0862">Zinc</keyword>
<accession>P0DPI0</accession>
<accession>A5HZZ9</accession>
<accession>A7G1U9</accession>
<accession>P01561</accession>
<accession>P10845</accession>
<accession>P18639</accession>
<dbReference type="EC" id="3.4.24.69" evidence="43"/>
<dbReference type="EMBL" id="X52066">
    <property type="protein sequence ID" value="CAA36289.1"/>
    <property type="molecule type" value="Genomic_DNA"/>
</dbReference>
<dbReference type="EMBL" id="M30196">
    <property type="protein sequence ID" value="AAA23262.1"/>
    <property type="molecule type" value="Genomic_DNA"/>
</dbReference>
<dbReference type="EMBL" id="X92973">
    <property type="protein sequence ID" value="CAA63551.1"/>
    <property type="molecule type" value="Genomic_DNA"/>
</dbReference>
<dbReference type="EMBL" id="D67030">
    <property type="protein sequence ID" value="BAA11051.1"/>
    <property type="molecule type" value="Genomic_DNA"/>
</dbReference>
<dbReference type="PIR" id="A35294">
    <property type="entry name" value="BTCLAB"/>
</dbReference>
<dbReference type="RefSeq" id="WP_003356619.1">
    <property type="nucleotide sequence ID" value="NZ_NQVW01000004.1"/>
</dbReference>
<dbReference type="RefSeq" id="WP_011948511.1">
    <property type="nucleotide sequence ID" value="NZ_SWYN01000009.1"/>
</dbReference>
<dbReference type="PDB" id="1XTF">
    <property type="method" value="X-ray"/>
    <property type="resolution" value="2.20 A"/>
    <property type="chains" value="A/B=2-420"/>
</dbReference>
<dbReference type="PDB" id="1XTG">
    <property type="method" value="X-ray"/>
    <property type="resolution" value="2.10 A"/>
    <property type="chains" value="A=2-420"/>
</dbReference>
<dbReference type="PDB" id="2ILP">
    <property type="method" value="X-ray"/>
    <property type="resolution" value="1.90 A"/>
    <property type="chains" value="A/B=3-424"/>
</dbReference>
<dbReference type="PDB" id="2IMA">
    <property type="method" value="X-ray"/>
    <property type="resolution" value="1.94 A"/>
    <property type="chains" value="A/B=1-424"/>
</dbReference>
<dbReference type="PDB" id="2IMB">
    <property type="method" value="X-ray"/>
    <property type="resolution" value="2.41 A"/>
    <property type="chains" value="A/B=3-424"/>
</dbReference>
<dbReference type="PDB" id="2IMC">
    <property type="method" value="X-ray"/>
    <property type="resolution" value="2.00 A"/>
    <property type="chains" value="A/B=3-424"/>
</dbReference>
<dbReference type="PDB" id="2ISE">
    <property type="method" value="X-ray"/>
    <property type="resolution" value="2.20 A"/>
    <property type="chains" value="A/B=1-420"/>
</dbReference>
<dbReference type="PDB" id="2ISG">
    <property type="method" value="X-ray"/>
    <property type="resolution" value="2.00 A"/>
    <property type="chains" value="A/B=1-420"/>
</dbReference>
<dbReference type="PDB" id="2ISH">
    <property type="method" value="X-ray"/>
    <property type="resolution" value="2.00 A"/>
    <property type="chains" value="A/B=1-420"/>
</dbReference>
<dbReference type="PDB" id="2VU9">
    <property type="method" value="X-ray"/>
    <property type="resolution" value="1.60 A"/>
    <property type="chains" value="A=876-1296"/>
</dbReference>
<dbReference type="PDB" id="2VUA">
    <property type="method" value="X-ray"/>
    <property type="resolution" value="1.70 A"/>
    <property type="chains" value="A=876-1296"/>
</dbReference>
<dbReference type="PDB" id="2W2D">
    <property type="method" value="X-ray"/>
    <property type="resolution" value="2.59 A"/>
    <property type="chains" value="A/C=3-442, B/D=447-877"/>
</dbReference>
<dbReference type="PDB" id="3BOK">
    <property type="method" value="X-ray"/>
    <property type="resolution" value="1.25 A"/>
    <property type="chains" value="A=3-425"/>
</dbReference>
<dbReference type="PDB" id="3BON">
    <property type="method" value="X-ray"/>
    <property type="resolution" value="1.20 A"/>
    <property type="chains" value="A=3-425"/>
</dbReference>
<dbReference type="PDB" id="3BOO">
    <property type="method" value="X-ray"/>
    <property type="resolution" value="1.40 A"/>
    <property type="chains" value="A=3-425"/>
</dbReference>
<dbReference type="PDB" id="3V0A">
    <property type="method" value="X-ray"/>
    <property type="resolution" value="2.70 A"/>
    <property type="chains" value="A=1-1296"/>
</dbReference>
<dbReference type="PDB" id="3V0B">
    <property type="method" value="X-ray"/>
    <property type="resolution" value="3.90 A"/>
    <property type="chains" value="A=1-1296"/>
</dbReference>
<dbReference type="PDB" id="3V0C">
    <property type="method" value="X-ray"/>
    <property type="resolution" value="4.30 A"/>
    <property type="chains" value="A=1-1296"/>
</dbReference>
<dbReference type="PDB" id="3ZUR">
    <property type="method" value="X-ray"/>
    <property type="resolution" value="2.71 A"/>
    <property type="chains" value="A/B=3-430, A/B=454-865"/>
</dbReference>
<dbReference type="PDB" id="3ZUS">
    <property type="method" value="X-ray"/>
    <property type="resolution" value="2.95 A"/>
    <property type="chains" value="A/B/C/D=3-431, A/B/C/D=454-865"/>
</dbReference>
<dbReference type="PDB" id="4HEV">
    <property type="method" value="X-ray"/>
    <property type="resolution" value="2.50 A"/>
    <property type="chains" value="A/B=1-425"/>
</dbReference>
<dbReference type="PDB" id="4IQP">
    <property type="method" value="X-ray"/>
    <property type="resolution" value="2.30 A"/>
    <property type="chains" value="A=871-1296"/>
</dbReference>
<dbReference type="PDB" id="4JRA">
    <property type="method" value="X-ray"/>
    <property type="resolution" value="2.30 A"/>
    <property type="chains" value="A/B=871-1296"/>
</dbReference>
<dbReference type="PDB" id="5JLV">
    <property type="method" value="X-ray"/>
    <property type="resolution" value="2.00 A"/>
    <property type="chains" value="A/B=872-1296"/>
</dbReference>
<dbReference type="PDB" id="5JMC">
    <property type="method" value="X-ray"/>
    <property type="resolution" value="2.64 A"/>
    <property type="chains" value="A/C/E/G=872-1296"/>
</dbReference>
<dbReference type="PDB" id="5MK6">
    <property type="method" value="X-ray"/>
    <property type="resolution" value="1.45 A"/>
    <property type="chains" value="A=871-1296"/>
</dbReference>
<dbReference type="PDB" id="5MK7">
    <property type="method" value="X-ray"/>
    <property type="resolution" value="1.80 A"/>
    <property type="chains" value="A=871-1296"/>
</dbReference>
<dbReference type="PDB" id="5TPB">
    <property type="method" value="X-ray"/>
    <property type="resolution" value="2.60 A"/>
    <property type="chains" value="A/B=876-1296"/>
</dbReference>
<dbReference type="PDB" id="5TPC">
    <property type="method" value="X-ray"/>
    <property type="resolution" value="2.00 A"/>
    <property type="chains" value="A=876-1296"/>
</dbReference>
<dbReference type="PDB" id="5V8P">
    <property type="method" value="X-ray"/>
    <property type="resolution" value="2.50 A"/>
    <property type="chains" value="A/B=1-424"/>
</dbReference>
<dbReference type="PDB" id="5V8R">
    <property type="method" value="X-ray"/>
    <property type="resolution" value="1.90 A"/>
    <property type="chains" value="A/B=1-424"/>
</dbReference>
<dbReference type="PDB" id="5V8U">
    <property type="method" value="X-ray"/>
    <property type="resolution" value="2.05 A"/>
    <property type="chains" value="A/B=1-424"/>
</dbReference>
<dbReference type="PDB" id="5VGV">
    <property type="method" value="X-ray"/>
    <property type="resolution" value="2.60 A"/>
    <property type="chains" value="A=1-425"/>
</dbReference>
<dbReference type="PDB" id="5VGX">
    <property type="method" value="X-ray"/>
    <property type="resolution" value="2.15 A"/>
    <property type="chains" value="A=1-425"/>
</dbReference>
<dbReference type="PDB" id="6DKK">
    <property type="method" value="X-ray"/>
    <property type="resolution" value="2.70 A"/>
    <property type="chains" value="A/B=547-871"/>
</dbReference>
<dbReference type="PDB" id="6MHJ">
    <property type="method" value="X-ray"/>
    <property type="resolution" value="3.02 A"/>
    <property type="chains" value="A=547-871"/>
</dbReference>
<dbReference type="PDB" id="6XCB">
    <property type="method" value="X-ray"/>
    <property type="resolution" value="1.74 A"/>
    <property type="chains" value="A=3-424"/>
</dbReference>
<dbReference type="PDB" id="6XCC">
    <property type="method" value="X-ray"/>
    <property type="resolution" value="1.90 A"/>
    <property type="chains" value="A=3-424"/>
</dbReference>
<dbReference type="PDB" id="6XCD">
    <property type="method" value="X-ray"/>
    <property type="resolution" value="1.92 A"/>
    <property type="chains" value="A=3-424"/>
</dbReference>
<dbReference type="PDB" id="6XCE">
    <property type="method" value="X-ray"/>
    <property type="resolution" value="2.50 A"/>
    <property type="chains" value="A=3-424"/>
</dbReference>
<dbReference type="PDB" id="6XCF">
    <property type="method" value="X-ray"/>
    <property type="resolution" value="1.68 A"/>
    <property type="chains" value="A=3-424"/>
</dbReference>
<dbReference type="PDB" id="7KYF">
    <property type="method" value="X-ray"/>
    <property type="resolution" value="2.33 A"/>
    <property type="chains" value="C=1-417"/>
</dbReference>
<dbReference type="PDB" id="7KYH">
    <property type="method" value="X-ray"/>
    <property type="resolution" value="2.91 A"/>
    <property type="chains" value="A/B/C/D=1-417"/>
</dbReference>
<dbReference type="PDB" id="7LZP">
    <property type="method" value="X-ray"/>
    <property type="resolution" value="2.86 A"/>
    <property type="chains" value="A/D=2-438"/>
</dbReference>
<dbReference type="PDB" id="7M1H">
    <property type="method" value="X-ray"/>
    <property type="resolution" value="2.78 A"/>
    <property type="chains" value="A=2-438"/>
</dbReference>
<dbReference type="PDB" id="8RVG">
    <property type="method" value="X-ray"/>
    <property type="resolution" value="1.90 A"/>
    <property type="chains" value="A/B=876-1296"/>
</dbReference>
<dbReference type="PDB" id="8RVH">
    <property type="method" value="X-ray"/>
    <property type="resolution" value="1.80 A"/>
    <property type="chains" value="A=876-1296"/>
</dbReference>
<dbReference type="PDB" id="8RVI">
    <property type="method" value="X-ray"/>
    <property type="resolution" value="1.60 A"/>
    <property type="chains" value="A=876-1296"/>
</dbReference>
<dbReference type="PDB" id="9ARL">
    <property type="method" value="EM"/>
    <property type="resolution" value="4.00 A"/>
    <property type="chains" value="A=1-1296"/>
</dbReference>
<dbReference type="PDB" id="9F1R">
    <property type="method" value="EM"/>
    <property type="resolution" value="3.67 A"/>
    <property type="chains" value="B=871-1296"/>
</dbReference>
<dbReference type="PDB" id="9F25">
    <property type="method" value="EM"/>
    <property type="resolution" value="3.70 A"/>
    <property type="chains" value="A=2-1296"/>
</dbReference>
<dbReference type="PDB" id="9F2B">
    <property type="method" value="EM"/>
    <property type="resolution" value="3.49 A"/>
    <property type="chains" value="B=2-1296"/>
</dbReference>
<dbReference type="PDB" id="9F2J">
    <property type="method" value="EM"/>
    <property type="resolution" value="3.98 A"/>
    <property type="chains" value="B=2-1296"/>
</dbReference>
<dbReference type="PDB" id="9F2Y">
    <property type="method" value="EM"/>
    <property type="resolution" value="4.39 A"/>
    <property type="chains" value="B=2-1296"/>
</dbReference>
<dbReference type="PDB" id="9F3C">
    <property type="method" value="EM"/>
    <property type="resolution" value="5.41 A"/>
    <property type="chains" value="B=2-1296"/>
</dbReference>
<dbReference type="PDBsum" id="1XTF"/>
<dbReference type="PDBsum" id="1XTG"/>
<dbReference type="PDBsum" id="2ILP"/>
<dbReference type="PDBsum" id="2IMA"/>
<dbReference type="PDBsum" id="2IMB"/>
<dbReference type="PDBsum" id="2IMC"/>
<dbReference type="PDBsum" id="2ISE"/>
<dbReference type="PDBsum" id="2ISG"/>
<dbReference type="PDBsum" id="2ISH"/>
<dbReference type="PDBsum" id="2VU9"/>
<dbReference type="PDBsum" id="2VUA"/>
<dbReference type="PDBsum" id="2W2D"/>
<dbReference type="PDBsum" id="3BOK"/>
<dbReference type="PDBsum" id="3BON"/>
<dbReference type="PDBsum" id="3BOO"/>
<dbReference type="PDBsum" id="3V0A"/>
<dbReference type="PDBsum" id="3V0B"/>
<dbReference type="PDBsum" id="3V0C"/>
<dbReference type="PDBsum" id="3ZUR"/>
<dbReference type="PDBsum" id="3ZUS"/>
<dbReference type="PDBsum" id="4HEV"/>
<dbReference type="PDBsum" id="4IQP"/>
<dbReference type="PDBsum" id="4JRA"/>
<dbReference type="PDBsum" id="5JLV"/>
<dbReference type="PDBsum" id="5JMC"/>
<dbReference type="PDBsum" id="5MK6"/>
<dbReference type="PDBsum" id="5MK7"/>
<dbReference type="PDBsum" id="5TPB"/>
<dbReference type="PDBsum" id="5TPC"/>
<dbReference type="PDBsum" id="5V8P"/>
<dbReference type="PDBsum" id="5V8R"/>
<dbReference type="PDBsum" id="5V8U"/>
<dbReference type="PDBsum" id="5VGV"/>
<dbReference type="PDBsum" id="5VGX"/>
<dbReference type="PDBsum" id="6DKK"/>
<dbReference type="PDBsum" id="6MHJ"/>
<dbReference type="PDBsum" id="6XCB"/>
<dbReference type="PDBsum" id="6XCC"/>
<dbReference type="PDBsum" id="6XCD"/>
<dbReference type="PDBsum" id="6XCE"/>
<dbReference type="PDBsum" id="6XCF"/>
<dbReference type="PDBsum" id="7KYF"/>
<dbReference type="PDBsum" id="7KYH"/>
<dbReference type="PDBsum" id="7LZP"/>
<dbReference type="PDBsum" id="7M1H"/>
<dbReference type="PDBsum" id="8RVG"/>
<dbReference type="PDBsum" id="8RVH"/>
<dbReference type="PDBsum" id="8RVI"/>
<dbReference type="PDBsum" id="9ARL"/>
<dbReference type="PDBsum" id="9F1R"/>
<dbReference type="PDBsum" id="9F25"/>
<dbReference type="PDBsum" id="9F2B"/>
<dbReference type="PDBsum" id="9F2J"/>
<dbReference type="PDBsum" id="9F2Y"/>
<dbReference type="PDBsum" id="9F3C"/>
<dbReference type="EMDB" id="EMD-36933"/>
<dbReference type="EMDB" id="EMD-36934"/>
<dbReference type="EMDB" id="EMD-50135"/>
<dbReference type="EMDB" id="EMD-50138"/>
<dbReference type="EMDB" id="EMD-50139"/>
<dbReference type="EMDB" id="EMD-50146"/>
<dbReference type="EMDB" id="EMD-50147"/>
<dbReference type="EMDB" id="EMD-50151"/>
<dbReference type="EMDB" id="EMD-50154"/>
<dbReference type="EMDB" id="EMD-50158"/>
<dbReference type="EMDB" id="EMD-50163"/>
<dbReference type="EMDB" id="EMD-50166"/>
<dbReference type="SMR" id="P0DPI0"/>
<dbReference type="IntAct" id="P0DPI0">
    <property type="interactions" value="4"/>
</dbReference>
<dbReference type="MINT" id="P0DPI0"/>
<dbReference type="BindingDB" id="P0DPI0"/>
<dbReference type="ChEMBL" id="CHEMBL5192"/>
<dbReference type="UniLectin" id="P0DPI0"/>
<dbReference type="ABCD" id="P0DPI0">
    <property type="antibodies" value="93 sequenced antibodies"/>
</dbReference>
<dbReference type="GeneID" id="5185061"/>
<dbReference type="OrthoDB" id="1936604at2"/>
<dbReference type="Reactome" id="R-HSA-5250968">
    <property type="pathway name" value="Toxicity of botulinum toxin type A (botA)"/>
</dbReference>
<dbReference type="GO" id="GO:0005576">
    <property type="term" value="C:extracellular region"/>
    <property type="evidence" value="ECO:0007669"/>
    <property type="project" value="UniProtKB-SubCell"/>
</dbReference>
<dbReference type="GO" id="GO:0044161">
    <property type="term" value="C:host cell cytoplasmic vesicle"/>
    <property type="evidence" value="ECO:0007669"/>
    <property type="project" value="UniProtKB-SubCell"/>
</dbReference>
<dbReference type="GO" id="GO:0044164">
    <property type="term" value="C:host cell cytosol"/>
    <property type="evidence" value="ECO:0007669"/>
    <property type="project" value="UniProtKB-SubCell"/>
</dbReference>
<dbReference type="GO" id="GO:0020002">
    <property type="term" value="C:host cell plasma membrane"/>
    <property type="evidence" value="ECO:0007669"/>
    <property type="project" value="UniProtKB-KW"/>
</dbReference>
<dbReference type="GO" id="GO:0044231">
    <property type="term" value="C:host cell presynaptic membrane"/>
    <property type="evidence" value="ECO:0007669"/>
    <property type="project" value="UniProtKB-SubCell"/>
</dbReference>
<dbReference type="GO" id="GO:0016020">
    <property type="term" value="C:membrane"/>
    <property type="evidence" value="ECO:0007669"/>
    <property type="project" value="UniProtKB-KW"/>
</dbReference>
<dbReference type="GO" id="GO:1905576">
    <property type="term" value="F:ganglioside GT1b binding"/>
    <property type="evidence" value="ECO:0000314"/>
    <property type="project" value="UniProtKB"/>
</dbReference>
<dbReference type="GO" id="GO:0004222">
    <property type="term" value="F:metalloendopeptidase activity"/>
    <property type="evidence" value="ECO:0007669"/>
    <property type="project" value="UniProtKB-EC"/>
</dbReference>
<dbReference type="GO" id="GO:0008320">
    <property type="term" value="F:protein transmembrane transporter activity"/>
    <property type="evidence" value="ECO:0000269"/>
    <property type="project" value="Reactome"/>
</dbReference>
<dbReference type="GO" id="GO:0090729">
    <property type="term" value="F:toxin activity"/>
    <property type="evidence" value="ECO:0007669"/>
    <property type="project" value="UniProtKB-KW"/>
</dbReference>
<dbReference type="GO" id="GO:0008270">
    <property type="term" value="F:zinc ion binding"/>
    <property type="evidence" value="ECO:0000314"/>
    <property type="project" value="UniProtKB"/>
</dbReference>
<dbReference type="GO" id="GO:0006508">
    <property type="term" value="P:proteolysis"/>
    <property type="evidence" value="ECO:0007669"/>
    <property type="project" value="UniProtKB-KW"/>
</dbReference>
<dbReference type="GO" id="GO:0141157">
    <property type="term" value="P:symbiont-mediated suppression of host exocytosis"/>
    <property type="evidence" value="ECO:0000269"/>
    <property type="project" value="SigSci"/>
</dbReference>
<dbReference type="CDD" id="cd23388">
    <property type="entry name" value="Toxin_R_bind_C_BoNTA_like"/>
    <property type="match status" value="1"/>
</dbReference>
<dbReference type="FunFam" id="2.60.120.200:FF:000184">
    <property type="entry name" value="Botulinum neurotoxin type A"/>
    <property type="match status" value="1"/>
</dbReference>
<dbReference type="FunFam" id="2.80.10.50:FF:000070">
    <property type="entry name" value="Botulinum neurotoxin type A"/>
    <property type="match status" value="1"/>
</dbReference>
<dbReference type="FunFam" id="3.90.1240.10:FF:000002">
    <property type="entry name" value="Botulinum neurotoxin type A"/>
    <property type="match status" value="1"/>
</dbReference>
<dbReference type="Gene3D" id="1.20.58.540">
    <property type="match status" value="1"/>
</dbReference>
<dbReference type="Gene3D" id="2.60.120.200">
    <property type="match status" value="1"/>
</dbReference>
<dbReference type="Gene3D" id="2.80.10.50">
    <property type="match status" value="1"/>
</dbReference>
<dbReference type="Gene3D" id="1.20.1120.10">
    <property type="entry name" value="Clostridium botulinum neurotoxin b, 'coiled-coil' domain"/>
    <property type="match status" value="1"/>
</dbReference>
<dbReference type="Gene3D" id="4.10.1280.10">
    <property type="entry name" value="Clostridium neurotoxins"/>
    <property type="match status" value="1"/>
</dbReference>
<dbReference type="Gene3D" id="3.90.1240.10">
    <property type="entry name" value="Metalloproteases ('zincins'), catalytic domain like"/>
    <property type="match status" value="1"/>
</dbReference>
<dbReference type="InterPro" id="IPR000395">
    <property type="entry name" value="Bot/tetX_LC"/>
</dbReference>
<dbReference type="InterPro" id="IPR036248">
    <property type="entry name" value="Clostridium_toxin_transloc"/>
</dbReference>
<dbReference type="InterPro" id="IPR013320">
    <property type="entry name" value="ConA-like_dom_sf"/>
</dbReference>
<dbReference type="InterPro" id="IPR011065">
    <property type="entry name" value="Kunitz_inhibitor_STI-like_sf"/>
</dbReference>
<dbReference type="InterPro" id="IPR013104">
    <property type="entry name" value="Toxin_rcpt-bd_C"/>
</dbReference>
<dbReference type="InterPro" id="IPR012928">
    <property type="entry name" value="Toxin_rcpt-bd_N"/>
</dbReference>
<dbReference type="InterPro" id="IPR012500">
    <property type="entry name" value="Toxin_trans"/>
</dbReference>
<dbReference type="Pfam" id="PF01742">
    <property type="entry name" value="Peptidase_M27"/>
    <property type="match status" value="1"/>
</dbReference>
<dbReference type="Pfam" id="PF07951">
    <property type="entry name" value="Toxin_R_bind_C"/>
    <property type="match status" value="1"/>
</dbReference>
<dbReference type="Pfam" id="PF07953">
    <property type="entry name" value="Toxin_R_bind_N"/>
    <property type="match status" value="1"/>
</dbReference>
<dbReference type="Pfam" id="PF07952">
    <property type="entry name" value="Toxin_trans"/>
    <property type="match status" value="1"/>
</dbReference>
<dbReference type="PRINTS" id="PR00760">
    <property type="entry name" value="BONTOXILYSIN"/>
</dbReference>
<dbReference type="SUPFAM" id="SSF58091">
    <property type="entry name" value="Clostridium neurotoxins, 'coiled-coil' domain"/>
    <property type="match status" value="1"/>
</dbReference>
<dbReference type="SUPFAM" id="SSF49899">
    <property type="entry name" value="Concanavalin A-like lectins/glucanases"/>
    <property type="match status" value="1"/>
</dbReference>
<dbReference type="SUPFAM" id="SSF55486">
    <property type="entry name" value="Metalloproteases ('zincins'), catalytic domain"/>
    <property type="match status" value="1"/>
</dbReference>
<dbReference type="SUPFAM" id="SSF50386">
    <property type="entry name" value="STI-like"/>
    <property type="match status" value="1"/>
</dbReference>
<dbReference type="PROSITE" id="PS00142">
    <property type="entry name" value="ZINC_PROTEASE"/>
    <property type="match status" value="1"/>
</dbReference>
<protein>
    <recommendedName>
        <fullName>Botulinum neurotoxin type A</fullName>
        <shortName>BoNT/A</shortName>
    </recommendedName>
    <alternativeName>
        <fullName>Bontoxilysin-A</fullName>
        <shortName>BOTOX</shortName>
    </alternativeName>
    <alternativeName>
        <fullName>Botulinum neurotoxin type A1</fullName>
    </alternativeName>
    <component>
        <recommendedName>
            <fullName>Botulinum neurotoxin A light chain</fullName>
            <shortName>LC</shortName>
            <ecNumber evidence="43">3.4.24.69</ecNumber>
        </recommendedName>
    </component>
    <component>
        <recommendedName>
            <fullName>Botulinum neurotoxin A heavy chain</fullName>
            <shortName>HC</shortName>
        </recommendedName>
    </component>
</protein>
<reference key="1">
    <citation type="journal article" date="1990" name="Eur. J. Biochem.">
        <title>The complete amino acid sequence of the Clostridium botulinum type A neurotoxin, deduced by nucleotide sequence analysis of the encoding gene.</title>
        <authorList>
            <person name="Thompson D.E."/>
            <person name="Brehm J.K."/>
            <person name="Oultram J.D."/>
            <person name="Swinfield T.-J."/>
            <person name="Shone C.C."/>
            <person name="Atkinson T."/>
            <person name="Melling J."/>
            <person name="Minton N.P."/>
        </authorList>
    </citation>
    <scope>NUCLEOTIDE SEQUENCE [GENOMIC DNA]</scope>
    <source>
        <strain>NCTC 2916 / Type A</strain>
    </source>
</reference>
<reference key="2">
    <citation type="journal article" date="1990" name="J. Biol. Chem.">
        <title>The complete sequence of botulinum neurotoxin type A and comparison with other clostridial neurotoxins.</title>
        <authorList>
            <person name="Binz T."/>
            <person name="Kurazono H."/>
            <person name="Wille M."/>
            <person name="Frevert J."/>
            <person name="Wernars K."/>
            <person name="Niemann H."/>
        </authorList>
    </citation>
    <scope>NUCLEOTIDE SEQUENCE [GENOMIC DNA]</scope>
    <source>
        <strain>62A / Type A</strain>
    </source>
</reference>
<reference key="3">
    <citation type="journal article" date="1996" name="Int. J. Syst. Bacteriol.">
        <title>Organization and phylogenetic interrelationships of genes encoding components of the botulinum toxin complex in proteolytic Clostridium botulinum types A, B, and F: evidence of chimeric sequences in the gene encoding the nontoxic nonhemagglutinin component.</title>
        <authorList>
            <person name="East A.K."/>
            <person name="Bhandari M."/>
            <person name="Stacey J.M."/>
            <person name="Campbell K.D."/>
            <person name="Collins M.D."/>
        </authorList>
    </citation>
    <scope>NUCLEOTIDE SEQUENCE [GENOMIC DNA] OF 1-66</scope>
    <source>
        <strain>62A / Type A</strain>
    </source>
</reference>
<reference key="4">
    <citation type="journal article" date="1995" name="FEBS Lett.">
        <title>Molecular characterization of two forms of nontoxic-nonhemagglutinin components of Clostridium botulinum type A progenitor toxins.</title>
        <authorList>
            <person name="Fujita R."/>
            <person name="Fujinaga Y."/>
            <person name="Inoue K."/>
            <person name="Nakajima H."/>
            <person name="Kumon H."/>
            <person name="Oguma K."/>
        </authorList>
    </citation>
    <scope>NUCLEOTIDE SEQUENCE [GENOMIC DNA] OF 1-19</scope>
    <source>
        <strain>NIH / Type A</strain>
    </source>
</reference>
<reference key="5">
    <citation type="journal article" date="1984" name="Biochem. Biophys. Res. Commun.">
        <title>Partial amino acid sequence of the heavy and light chains of botulinum neurotoxin type A.</title>
        <authorList>
            <person name="Schmidt J.J."/>
            <person name="Sartymoorthy V."/>
            <person name="Dasgupta B.R."/>
        </authorList>
    </citation>
    <scope>PROTEIN SEQUENCE OF 2-18 AND 449-458</scope>
    <scope>SUBCELLULAR LOCATION (BOTULINUM NEUROTOXIN A LIGHT CHAIN AND BOTULINUM NEUROTOXIN A HEAVY CHAIN)</scope>
    <source>
        <strain>Type A</strain>
    </source>
</reference>
<reference key="6">
    <citation type="journal article" date="1987" name="Biochemistry">
        <title>Partial sequence of the light chain of botulinum neurotoxin type A.</title>
        <authorList>
            <person name="Dasgupta B.R."/>
            <person name="Foley J."/>
            <person name="Niece R."/>
        </authorList>
    </citation>
    <scope>PROTEIN SEQUENCE OF 2-47</scope>
</reference>
<reference key="7">
    <citation type="journal article" date="1990" name="Biochimie">
        <title>Botulinum neurotoxin type A: sequence of amino acids at the N-terminus and around the nicking site.</title>
        <authorList>
            <person name="Dasgupta B.R."/>
            <person name="Dekleva M.L."/>
        </authorList>
    </citation>
    <scope>PROTEIN SEQUENCE OF 2-6 AND 445-457</scope>
    <scope>PROCESSING</scope>
    <source>
        <strain>Type A</strain>
    </source>
</reference>
<reference key="8">
    <citation type="journal article" date="2001" name="J. Protein Chem.">
        <title>Enzymatic autocatalysis of botulinum A neurotoxin light chain.</title>
        <authorList>
            <person name="Ahmed S.A."/>
            <person name="Byrne M.P."/>
            <person name="Jensen M."/>
            <person name="Hines H.B."/>
            <person name="Brueggemann E."/>
            <person name="Smith L.A."/>
        </authorList>
    </citation>
    <scope>PROTEIN SEQUENCE OF 251-257; 267-273 AND 420-448</scope>
    <scope>COFACTOR</scope>
    <scope>PROTEOLYTIC CLEAVAGE</scope>
</reference>
<reference key="9">
    <citation type="journal article" date="1985" name="Eur. J. Biochem.">
        <title>Inactivation of Clostridium botulinum type A neurotoxin by trypsin and purification of two tryptic fragments. Proteolytic action near the COOH-terminus of the heavy subunit destroys toxin-binding activity.</title>
        <authorList>
            <person name="Shone C.C."/>
            <person name="Hambleton P."/>
            <person name="Melling J."/>
        </authorList>
    </citation>
    <scope>PROTEIN SEQUENCE OF 449-483</scope>
    <source>
        <strain>NCTC 2916 / Type A</strain>
    </source>
</reference>
<reference key="10">
    <citation type="journal article" date="1949" name="J. Physiol. (Lond.)">
        <title>The action of botulinum toxin on the neuro-muscular junction.</title>
        <authorList>
            <person name="Burgen A.S."/>
            <person name="Dickens F."/>
            <person name="Zatman L.J."/>
        </authorList>
    </citation>
    <scope>FUNCTION (BOTULINUM NEUROTOXIN TYPE A)</scope>
    <source>
        <strain>4587 / Type A</strain>
    </source>
</reference>
<reference key="11">
    <citation type="journal article" date="1984" name="Nature">
        <title>Acceptors for botulinum neurotoxin reside on motor nerve terminals and mediate its internalization.</title>
        <authorList>
            <person name="Dolly J.O."/>
            <person name="Black J."/>
            <person name="Williams R.S."/>
            <person name="Melling J."/>
        </authorList>
    </citation>
    <scope>FUNCTION (BOTULINUM NEUROTOXIN A HEAVY CHAIN)</scope>
    <scope>SUBCELLULAR LOCATION (BOTULINUM NEUROTOXIN TYPE A AND BOTULINUM NEUROTOXIN A HEAVY CHAIN)</scope>
    <scope>ACTIVITY REGULATION</scope>
    <source>
        <strain>Type A</strain>
    </source>
</reference>
<reference key="12">
    <citation type="journal article" date="1987" name="FEBS Lett.">
        <title>The N-terminal half of the heavy chain of botulinum type A neurotoxin forms channels in planar phospholipid bilayers.</title>
        <authorList>
            <person name="Blaustein R.O."/>
            <person name="Germann W.J."/>
            <person name="Finkelstein A."/>
            <person name="DasGupta B.R."/>
        </authorList>
    </citation>
    <scope>FUNCTION (BOTULINUM NEUROTOXIN A HEAVY CHAIN)</scope>
    <scope>DOMAIN</scope>
    <source>
        <strain>Type A</strain>
    </source>
</reference>
<reference key="13">
    <citation type="journal article" date="1992" name="J. Biol. Chem.">
        <title>Botulinum neurotoxins are zinc proteins.</title>
        <authorList>
            <person name="Schiavo G."/>
            <person name="Rossetto O."/>
            <person name="Santucci A."/>
            <person name="Dasgupta B.R."/>
            <person name="Montecucco C."/>
        </authorList>
    </citation>
    <scope>IDENTIFICATION AS A ZINC-BINDING PROTEIN</scope>
    <scope>COFACTOR</scope>
    <source>
        <strain>Type A</strain>
    </source>
</reference>
<reference key="14">
    <citation type="journal article" date="1992" name="J. Infect. Dis.">
        <title>Clinical and laboratory comparison of botulism from toxin types A, B, and E in the United States, 1975-1988.</title>
        <authorList>
            <person name="Woodruff B.A."/>
            <person name="Griffin P.M."/>
            <person name="McCroskey L.M."/>
            <person name="Smart J.F."/>
            <person name="Wainwright R.B."/>
            <person name="Bryant R.G."/>
            <person name="Hutwagner L.C."/>
            <person name="Hatheway C.L."/>
        </authorList>
    </citation>
    <scope>HOST RANGE</scope>
    <scope>EPIDEMIOLOGY</scope>
</reference>
<reference key="15">
    <citation type="journal article" date="1993" name="FEBS Lett.">
        <title>Botulinum neurotoxins serotypes A and E cleave SNAP-25 at distinct COOH-terminal peptide bonds.</title>
        <authorList>
            <person name="Schiavo G."/>
            <person name="Santtuci A."/>
            <person name="Dasgupta B.R."/>
            <person name="Mehta P.P."/>
            <person name="Jontes J."/>
            <person name="Benfenati F."/>
            <person name="Wilson M.C."/>
            <person name="Montecucco C."/>
        </authorList>
    </citation>
    <scope>FUNCTION (BOTULINUM NEUROTOXIN A LIGHT CHAIN)</scope>
    <scope>IDENTIFICATION OF SUBSTRATE</scope>
    <scope>CATALYTIC ACTIVITY</scope>
    <scope>SUBCELLULAR LOCATION (BOTULINUM NEUROTOXIN A LIGHT CHAIN)</scope>
    <source>
        <strain>Type A</strain>
    </source>
</reference>
<reference key="16">
    <citation type="journal article" date="1995" name="Biochemistry">
        <title>Expression and purification of the light chain of botulinum neurotoxin A: a single mutation abolishes its cleavage of SNAP-25 and neurotoxicity after reconstitution with the heavy chain.</title>
        <authorList>
            <person name="Zhou L."/>
            <person name="de Paiva A."/>
            <person name="Liu D."/>
            <person name="Aoki R."/>
            <person name="Dolly J.O."/>
        </authorList>
    </citation>
    <scope>FUNCTION (BOTULINUM NEUROTOXIN TYPE A AND BOTULINUM NEUROTOXIN A LIGHT CHAIN)</scope>
    <scope>CATALYTIC ACTIVITY</scope>
    <scope>COFACTOR</scope>
    <scope>SUBUNIT</scope>
    <scope>SUBCELLULAR LOCATION (BOTULINUM NEUROTOXIN A LIGHT CHAIN)</scope>
    <scope>DOMAIN</scope>
    <scope>MUTAGENESIS OF HIS-227</scope>
    <source>
        <strain>63A / Type A</strain>
    </source>
</reference>
<reference key="17">
    <citation type="journal article" date="1995" name="J. Appl. Bacteriol.">
        <title>In situ characterization of Clostridium botulinum neurotoxin synthesis and export.</title>
        <authorList>
            <person name="Call J.E."/>
            <person name="Cooke P.H."/>
            <person name="Miller A.J."/>
        </authorList>
    </citation>
    <scope>SUBCELLULAR LOCATION (BOTULINUM NEUROTOXIN TYPE A)</scope>
    <scope>INDUCTION</scope>
    <source>
        <strain>62A / Type A</strain>
    </source>
</reference>
<reference key="18">
    <citation type="journal article" date="1999" name="J. Cell Sci.">
        <title>Functional characterisation of tetanus and botulinum neurotoxins binding domains.</title>
        <authorList>
            <person name="Lalli G."/>
            <person name="Herreros J."/>
            <person name="Osborne S.L."/>
            <person name="Montecucco C."/>
            <person name="Rossetto O."/>
            <person name="Schiavo G."/>
        </authorList>
    </citation>
    <scope>FUNCTION (BOTULINUM NEUROTOXIN A HEAVY CHAIN)</scope>
    <scope>SUBCELLULAR LOCATION (BOTULINUM NEUROTOXIN A HEAVY CHAIN)</scope>
    <source>
        <strain>62A / P64 / Type A</strain>
    </source>
</reference>
<reference key="19">
    <citation type="journal article" date="1999" name="J. Neurochem.">
        <title>Proteolysis of SNAP-25 isoforms by botulinum neurotoxin types A, C, and E: domains and amino acid residues controlling the formation of enzyme-substrate complexes and cleavage.</title>
        <authorList>
            <person name="Vaidyanathan V.V."/>
            <person name="Yoshino K."/>
            <person name="Jahnz M."/>
            <person name="Doerries C."/>
            <person name="Bade S."/>
            <person name="Nauenburg S."/>
            <person name="Niemann H."/>
            <person name="Binz T."/>
        </authorList>
    </citation>
    <scope>FUNCTION (BOTULINUM NEUROTOXIN A LIGHT CHAIN)</scope>
    <scope>SUBSTRATE SPECIFICITY</scope>
    <scope>CATALYTIC ACTIVITY</scope>
    <scope>SUBCELLULAR LOCATION (BOTULINUM NEUROTOXIN A LIGHT CHAIN)</scope>
    <source>
        <strain>62A / P64 / Type A</strain>
    </source>
</reference>
<reference key="20">
    <citation type="journal article" date="2000" name="Biochemistry">
        <title>Probing the mechanistic role of glutamate residue in the zinc-binding motif of type A botulinum neurotoxin light chain.</title>
        <authorList>
            <person name="Li L."/>
            <person name="Binz T."/>
            <person name="Niemann H."/>
            <person name="Singh B.R."/>
        </authorList>
    </citation>
    <scope>FUNCTION (BOTULINUM NEUROTOXIN A LIGHT CHAIN)</scope>
    <scope>ACTIVE SITE</scope>
    <scope>CATALYTIC ACTIVITY</scope>
    <scope>BIOPHYSICOCHEMICAL PROPERTIES</scope>
    <scope>MUTAGENESIS OF GLU-224</scope>
    <source>
        <strain>Type A</strain>
    </source>
</reference>
<reference key="21">
    <citation type="journal article" date="2000" name="Infect. Immun.">
        <title>Inhibition of vesicular secretion in both neuronal and nonneuronal cells by a retargeted endopeptidase derivative of Clostridium botulinum neurotoxin type A.</title>
        <authorList>
            <person name="Chaddock J.A."/>
            <person name="Purkiss J.R."/>
            <person name="Friis L.M."/>
            <person name="Broadbridge J.D."/>
            <person name="Duggan M.J."/>
            <person name="Fooks S.J."/>
            <person name="Shone C.C."/>
            <person name="Quinn C.P."/>
            <person name="Foster K.A."/>
        </authorList>
    </citation>
    <scope>BIOTECHNOLOGY</scope>
    <source>
        <strain>NCTC 2916 / Type A</strain>
    </source>
</reference>
<reference key="22">
    <citation type="journal article" date="2001" name="Biochem. Biophys. Res. Commun.">
        <title>Site-directed mutagenesis identifies active-site residues of the light chain of botulinum neurotoxin type A.</title>
        <authorList>
            <person name="Rigoni M."/>
            <person name="Caccin P."/>
            <person name="Johnson E.A."/>
            <person name="Montecucco C."/>
            <person name="Rossetto O."/>
        </authorList>
    </citation>
    <scope>FUNCTION (BOTULINUM NEUROTOXIN A LIGHT CHAIN)</scope>
    <scope>COFACTOR</scope>
    <scope>MUTAGENESIS OF GLU-262; PHE-266 AND TYR-366</scope>
    <source>
        <strain>P64 / Type A</strain>
    </source>
</reference>
<reference key="23">
    <citation type="journal article" date="2002" name="Biochemistry">
        <title>Arg(362) and Tyr(365) of the botulinum neurotoxin type a light chain are involved in transition state stabilization.</title>
        <authorList>
            <person name="Binz T."/>
            <person name="Bade S."/>
            <person name="Rummel A."/>
            <person name="Kollewe A."/>
            <person name="Alves J."/>
        </authorList>
    </citation>
    <scope>FUNCTION (BOTULINUM NEUROTOXIN A LIGHT CHAIN)</scope>
    <scope>BIOPHYSICOCHEMICAL PROPERTIES</scope>
    <scope>MUTAGENESIS OF GLU-351; ARG-363 AND TYR-366</scope>
    <source>
        <strain>62A / P64 / Type A</strain>
    </source>
</reference>
<reference key="24">
    <citation type="journal article" date="2002" name="J. Biol. Chem.">
        <title>Botulinum neurotoxin A activity is dependent upon the presence of specific gangliosides in neuroblastoma cells expressing synaptotagmin I.</title>
        <authorList>
            <person name="Yowler B.C."/>
            <person name="Kensinger R.D."/>
            <person name="Schengrund C.L."/>
        </authorList>
    </citation>
    <scope>REQUIREMENT FOR GANGLIOSIDES FOR ACTIVITY (BOTULINUM NEUROTOXIN TYPE A)</scope>
    <source>
        <strain>Type A</strain>
    </source>
</reference>
<reference key="25">
    <citation type="journal article" date="2004" name="Mol. Microbiol.">
        <title>The HCC-domain of botulinum neurotoxins A and B exhibits a singular ganglioside binding site displaying serotype specific carbohydrate interaction.</title>
        <authorList>
            <person name="Rummel A."/>
            <person name="Mahrhold S."/>
            <person name="Bigalke H."/>
            <person name="Binz T."/>
        </authorList>
    </citation>
    <scope>FUNCTION (BOTULINUM NEUROTOXIN A HEAVY CHAIN)</scope>
    <scope>GANGLIOSIDE-BINDING (BOTULINUM NEUROTOXIN A HEAVY CHAIN)</scope>
    <scope>MUTAGENESIS OF GLU-1203; HIS-1253; SER-1264; TRP-1266 AND TYR-1267</scope>
    <scope>LIPID-BINDING</scope>
    <source>
        <strain>62A / Type A</strain>
    </source>
</reference>
<reference key="26">
    <citation type="journal article" date="2006" name="FEBS Lett.">
        <title>The synaptic vesicle protein 2C mediates the uptake of botulinum neurotoxin A into phrenic nerves.</title>
        <authorList>
            <person name="Mahrhold S."/>
            <person name="Rummel A."/>
            <person name="Bigalke H."/>
            <person name="Davletov B."/>
            <person name="Binz T."/>
        </authorList>
    </citation>
    <scope>IDENTIFICATION OF HOST RECEPTOR (BOTULINUM NEUROTOXIN TYPE A AND BOTULINUM NEUROTOXIN A HEAVY CHAIN)</scope>
    <scope>INTERACTION WITH HOST SV2C</scope>
    <source>
        <strain>Type A</strain>
    </source>
</reference>
<reference key="27">
    <citation type="journal article" date="2006" name="Science">
        <title>SV2 is the protein receptor for botulinum neurotoxin A.</title>
        <authorList>
            <person name="Dong M."/>
            <person name="Yeh F."/>
            <person name="Tepp W.H."/>
            <person name="Dean C."/>
            <person name="Johnson E.A."/>
            <person name="Janz R."/>
            <person name="Chapman E.R."/>
        </authorList>
    </citation>
    <scope>IDENTIFICATION OF HOST RECEPTOR (BOTULINUM NEUROTOXIN TYPE A)</scope>
    <scope>INTERACTION WITH HOST SV2 PROTEINS</scope>
    <source>
        <strain>Type A</strain>
    </source>
</reference>
<reference key="28">
    <citation type="journal article" date="2007" name="J. Biol. Chem.">
        <title>Crucial role of the disulfide bridge between botulinum neurotoxin light and heavy chains in protease translocation across membranes.</title>
        <authorList>
            <person name="Fischer A."/>
            <person name="Montal M."/>
        </authorList>
    </citation>
    <scope>FUNCTION (BOTULINUM NEUROTOXIN A LIGHT AND HEAVY CHAIN)</scope>
    <scope>DOMAIN</scope>
    <scope>DISULFIDE BOND</scope>
</reference>
<reference key="29">
    <citation type="journal article" date="2007" name="PLoS Pathog.">
        <title>Botulinum neurotoxin heavy chain belt as an intramolecular chaperone for the light chain.</title>
        <authorList>
            <person name="Brunger A.T."/>
            <person name="Breidenbach M.A."/>
            <person name="Jin R."/>
            <person name="Fischer A."/>
            <person name="Santos J.S."/>
            <person name="Montal M."/>
        </authorList>
    </citation>
    <scope>DISCUSSION OF BELT FUNCTION (BOTULINUM NEUROTOXIN A HEAVY CHAIN)</scope>
    <scope>DOMAIN</scope>
</reference>
<reference key="30">
    <citation type="journal article" date="2008" name="Mol. Biol. Cell">
        <title>Glycosylated SV2A and SV2B mediate the entry of botulinum neurotoxin E into neurons.</title>
        <authorList>
            <person name="Dong M."/>
            <person name="Liu H."/>
            <person name="Tepp W.H."/>
            <person name="Johnson E.A."/>
            <person name="Janz R."/>
            <person name="Chapman E.R."/>
        </authorList>
    </citation>
    <scope>IDENTIFICATION OF HOST RECEPTOR (BOTULINUM NEUROTOXIN TYPE A)</scope>
    <scope>INTERACTION WITH HOST SV2 PROTEINS</scope>
    <source>
        <strain>Type A</strain>
    </source>
</reference>
<reference key="31">
    <citation type="journal article" date="2008" name="PLoS Pathog.">
        <title>Botulinum neurotoxin devoid of receptor binding domain translocates active protease.</title>
        <authorList>
            <person name="Fischer A."/>
            <person name="Mushrush D.J."/>
            <person name="Lacy D.B."/>
            <person name="Montal M."/>
        </authorList>
    </citation>
    <scope>FUNCTION (BOTULINUM NEUROTOXIN A HEAVY CHAIN)</scope>
    <scope>DOMAIN</scope>
    <source>
        <strain>Type A</strain>
    </source>
</reference>
<reference key="32">
    <citation type="journal article" date="2009" name="Biochem. Biophys. Res. Commun.">
        <title>The N-terminal half of the receptor domain of botulinum neurotoxin A binds to microdomains of the plasma membrane.</title>
        <authorList>
            <person name="Muraro L."/>
            <person name="Tosatto S."/>
            <person name="Motterlini L."/>
            <person name="Rossetto O."/>
            <person name="Montecucco C."/>
        </authorList>
    </citation>
    <scope>FUNCTION (BOTULINUM NEUROTOXIN A HEAVY CHAIN)</scope>
    <scope>DOMAIN</scope>
    <scope>PHOSPHATIDYLINOSITOL-BINDING</scope>
    <source>
        <strain>Type A</strain>
    </source>
</reference>
<reference key="33">
    <citation type="journal article" date="2009" name="J. Neurochem.">
        <title>Botulinum neurotoxins C, E and F bind gangliosides via a conserved binding site prior to stimulation-dependent uptake with botulinum neurotoxin F utilising the three isoforms of SV2 as second receptor.</title>
        <authorList>
            <person name="Rummel A."/>
            <person name="Haefner K."/>
            <person name="Mahrhold S."/>
            <person name="Darashchonak N."/>
            <person name="Holt M."/>
            <person name="Jahn R."/>
            <person name="Beermann S."/>
            <person name="Karnath T."/>
            <person name="Bigalke H."/>
            <person name="Binz T."/>
        </authorList>
    </citation>
    <scope>FUNCTION (BOTULINUM NEUROTOXIN TYPE A)</scope>
    <scope>FUNCTION (BOTULINUM NEUROTOXIN A HEAVY CHAIN)</scope>
    <scope>INTERACTION WITH HOST SV2 PROTEINS</scope>
    <scope>MUTAGENESIS OF TRP-1266</scope>
</reference>
<reference key="34">
    <citation type="journal article" date="2011" name="J. Biol. Chem.">
        <title>Novel ganglioside-mediated entry of botulinum neurotoxin serotype D into neurons.</title>
        <authorList>
            <person name="Kroken A.R."/>
            <person name="Karalewitz A.P."/>
            <person name="Fu Z."/>
            <person name="Kim J.J."/>
            <person name="Barbieri J.T."/>
        </authorList>
    </citation>
    <scope>FUNCTION (BOTULINUM NEUROTOXIN TYPE A)</scope>
    <scope>SUBCELLULAR LOCATION (BOTULINUM NEUROTOXIN A HEAVY CHAIN)</scope>
    <source>
        <strain>Type A</strain>
    </source>
</reference>
<reference key="35">
    <citation type="journal article" date="2011" name="J. Biol. Chem.">
        <title>Dynamin inhibition blocks botulinum neurotoxin type A endocytosis in neurons and delays botulism.</title>
        <authorList>
            <person name="Harper C.B."/>
            <person name="Martin S."/>
            <person name="Nguyen T.H."/>
            <person name="Daniels S.J."/>
            <person name="Lavidis N.A."/>
            <person name="Popoff M.R."/>
            <person name="Hadzic G."/>
            <person name="Mariana A."/>
            <person name="Chau N."/>
            <person name="McCluskey A."/>
            <person name="Robinson P.J."/>
            <person name="Meunier F.A."/>
        </authorList>
    </citation>
    <scope>FUNCTION (BOTULINUM NEUROTOXIN TYPE A)</scope>
    <scope>SUBCELLULAR LOCATION (BOTULINUM NEUROTOXIN A HEAVY CHAIN)</scope>
    <scope>ACTIVITY REGULATION</scope>
</reference>
<reference key="36">
    <citation type="journal article" date="2011" name="J. Pharmacol. Exp. Ther.">
        <title>Evidence that botulinum toxin receptors on epithelial cells and neuronal cells are not identical: implications for development of a non-neurotropic vaccine.</title>
        <authorList>
            <person name="Elias M."/>
            <person name="Al-Saleem F."/>
            <person name="Ancharski D.M."/>
            <person name="Singh A."/>
            <person name="Nasser Z."/>
            <person name="Olson R.M."/>
            <person name="Simpson L.L."/>
        </authorList>
    </citation>
    <scope>FUNCTION (BOTULINUM NEUROTOXIN A HEAVY CHAIN)</scope>
    <scope>TRANSCYTOSIS ACROSS HOST CELLS</scope>
    <scope>BIOTECHNOLOGY</scope>
    <scope>MUTAGENESIS OF HIS-1253; 1266-TRP-TYR-1267; TRP-1266 AND TYR-1267</scope>
    <source>
        <strain>62A / Type A</strain>
    </source>
</reference>
<reference key="37">
    <citation type="journal article" date="2012" name="J. Biol. Chem.">
        <title>Beltless translocation domain of botulinum neurotoxin A embodies a minimum ion-conductive channel.</title>
        <authorList>
            <person name="Fischer A."/>
            <person name="Sambashivan S."/>
            <person name="Brunger A.T."/>
            <person name="Montal M."/>
        </authorList>
    </citation>
    <scope>FUNCTION (BOTULINUM NEUROTOXIN A HEAVY CHAIN)</scope>
    <scope>DOMAIN</scope>
    <source>
        <strain>Type A</strain>
    </source>
</reference>
<reference key="38">
    <citation type="journal article" date="2013" name="Mol. Neurobiol.">
        <title>Botulinum neurotoxin type A is internalized and translocated from small synaptic vesicles at the neuromuscular junction.</title>
        <authorList>
            <person name="Colasante C."/>
            <person name="Rossetto O."/>
            <person name="Morbiato L."/>
            <person name="Pirazzini M."/>
            <person name="Molgo J."/>
            <person name="Montecucco C."/>
        </authorList>
    </citation>
    <scope>FUNCTION (BOTULINUM NEUROTOXIN A HEAVY CHAIN)</scope>
    <scope>SUBCELLULAR LOCATION (BOTULINUM NEUROTOXIN A HEAVY CHAIN)</scope>
</reference>
<reference key="39">
    <citation type="journal article" date="2013" name="PLoS Pathog.">
        <title>Identification of fibroblast growth factor receptor 3 (FGFR3) as a protein receptor for botulinum neurotoxin serotype A (BoNT/A).</title>
        <authorList>
            <person name="Jacky B.P."/>
            <person name="Garay P.E."/>
            <person name="Dupuy J."/>
            <person name="Nelson J.B."/>
            <person name="Cai B."/>
            <person name="Molina Y."/>
            <person name="Wang J."/>
            <person name="Steward L.E."/>
            <person name="Broide R.S."/>
            <person name="Francis J."/>
            <person name="Aoki K.R."/>
            <person name="Stevens R.C."/>
            <person name="Fernandez-Salas E."/>
        </authorList>
    </citation>
    <scope>POSSIBLE IDENTIFICATION OF HOST RECEPTOR (BOTULINUM NEUROTOXIN TYPE A)</scope>
    <source>
        <strain>Type A</strain>
    </source>
</reference>
<reference key="40">
    <citation type="journal article" date="2016" name="Biochem. J.">
        <title>Only the complex N559-glycan in the synaptic vesicle glycoprotein 2C mediates high affinity binding to botulinum neurotoxin serotype A1.</title>
        <authorList>
            <person name="Mahrhold S."/>
            <person name="Bergstroem T."/>
            <person name="Stern D."/>
            <person name="Dorner B.G."/>
            <person name="Aastot C."/>
            <person name="Rummel A."/>
        </authorList>
    </citation>
    <scope>RECOGNITION OF RECEPTOR (BOTULINUM NEUROTOXIN A HEAVY CHAIN)</scope>
    <scope>SUBUNIT</scope>
    <source>
        <strain>62A / Type A</strain>
    </source>
</reference>
<reference key="41">
    <citation type="journal article" date="2017" name="Proc. Natl. Acad. Sci. U.S.A.">
        <title>Deubiquitinating enzyme VCIP135 dictates the duration of botulinum neurotoxin type A intoxication.</title>
        <authorList>
            <person name="Tsai Y.C."/>
            <person name="Kotiya A."/>
            <person name="Kiris E."/>
            <person name="Yang M."/>
            <person name="Bavari S."/>
            <person name="Tessarollo L."/>
            <person name="Oyler G.A."/>
            <person name="Weissman A.M."/>
        </authorList>
    </citation>
    <scope>UBIQUITINATION (BOTULINUM NEUROTOXIN A LIGHT CHAIN)</scope>
</reference>
<reference key="42">
    <citation type="journal article" date="2013" name="Toxicon">
        <title>The life history of a botulinum toxin molecule.</title>
        <authorList>
            <person name="Simpson L."/>
        </authorList>
    </citation>
    <scope>REVIEW</scope>
</reference>
<reference key="43">
    <citation type="journal article" date="2017" name="Pharmacol. Rev.">
        <title>Botulinum neurotoxins: Biology, pharmacology, and toxicology.</title>
        <authorList>
            <person name="Pirazzini M."/>
            <person name="Rossetto O."/>
            <person name="Eleopra R."/>
            <person name="Montecucco C."/>
        </authorList>
    </citation>
    <scope>REVIEW</scope>
</reference>
<reference evidence="73 74" key="44">
    <citation type="journal article" date="2004" name="Nature">
        <title>Substrate recognition strategy for botulinum neurotoxin serotype A.</title>
        <authorList>
            <person name="Breidenbach M.A."/>
            <person name="Brunger A.T."/>
        </authorList>
    </citation>
    <scope>X-RAY CRYSTALLOGRAPHY (2.10 ANGSTROMS) OF 2-420 IN COMPLEX WITH ZINC WITH AND WITHOUT SUBSTRATE</scope>
    <scope>FUNCTION (BOTULINUM NEUROTOXIN A LIGHT CHAIN)</scope>
    <scope>SUBSTRATE SPECIFICITY</scope>
    <scope>COFACTOR</scope>
    <source>
        <strain>Type A</strain>
    </source>
</reference>
<reference key="45">
    <citation type="journal article" date="2008" name="J. Biol. Chem.">
        <title>Molecular architecture of botulinum neurotoxin E revealed by single particle electron microscopy.</title>
        <authorList>
            <person name="Fischer A."/>
            <person name="Garcia-Rodriguez C."/>
            <person name="Geren I."/>
            <person name="Lou J."/>
            <person name="Marks J.D."/>
            <person name="Nakagawa T."/>
            <person name="Montal M."/>
        </authorList>
    </citation>
    <scope>STRUCTURE BY ELECTRON MICROSCOPY (24.0 ANGSTROMS)</scope>
    <scope>DOMAIN</scope>
    <source>
        <strain>Type A</strain>
    </source>
</reference>
<reference evidence="75 76" key="46">
    <citation type="journal article" date="2008" name="PLoS Pathog.">
        <title>Crystal structure of botulinum neurotoxin type A in complex with the cell surface co-receptor GT1b-insight into the toxin-neuron interaction.</title>
        <authorList>
            <person name="Stenmark P."/>
            <person name="Dupuy J."/>
            <person name="Imamura A."/>
            <person name="Kiso M."/>
            <person name="Stevens R.C."/>
        </authorList>
    </citation>
    <scope>X-RAY CRYSTALLOGRAPHY (1.60 ANGSTROMS) OF 874-1296 IN COMPLEX WITH GANGLIOSIDE GT1B ANALOG</scope>
    <scope>FUNCTION (BOTULINUM NEUROTOXIN A HEAVY CHAIN)</scope>
    <scope>GANGLIOSIDE-BINDING</scope>
    <source>
        <strain>Type A</strain>
    </source>
</reference>
<reference evidence="77" key="47">
    <citation type="journal article" date="2009" name="Biochem. Biophys. Res. Commun.">
        <title>Crystal structure of a catalytically active, non-toxic endopeptidase derivative of Clostridium botulinum toxin A.</title>
        <authorList>
            <person name="Masuyer G."/>
            <person name="Thiyagarajan N."/>
            <person name="James P.L."/>
            <person name="Marks P.M."/>
            <person name="Chaddock J.A."/>
            <person name="Acharya K.R."/>
        </authorList>
    </citation>
    <scope>X-RAY CRYSTALLOGRAPHY (2.59 ANGSTROMS) OF 1-445 AND 447-877 IN COMPLEX WITH ZINC</scope>
    <scope>FUNCTION (BOTULINUM NEUROTOXIN A LIGHT AND HEAVY CHAIN)</scope>
    <scope>COFACTOR</scope>
    <scope>DOMAIN</scope>
    <scope>DISULFIDE BONDS</scope>
    <source>
        <strain>NCTC 2916 / Type A</strain>
    </source>
</reference>
<reference evidence="78 79 80" key="48">
    <citation type="journal article" date="2012" name="Science">
        <title>Botulinum neurotoxin is shielded by NTNHA in an interlocked complex.</title>
        <authorList>
            <person name="Gu S."/>
            <person name="Rumpel S."/>
            <person name="Zhou J."/>
            <person name="Strotmeier J."/>
            <person name="Bigalke H."/>
            <person name="Perry K."/>
            <person name="Shoemaker C.B."/>
            <person name="Rummel A."/>
            <person name="Jin R."/>
        </authorList>
    </citation>
    <scope>X-RAY CRYSTALLOGRAPHY (2.70 ANGSTROMS) IN COMPLEX WITH ZINC AND NTNHA</scope>
    <scope>FUNCTION (BOTULINUM NEUROTOXIN A HEAVY CHAIN)</scope>
    <scope>COFACTOR</scope>
    <scope>SUBUNIT</scope>
    <scope>DOMAIN</scope>
    <scope>DISULFIDE BONDS</scope>
    <scope>MUTAGENESIS OF 861-ARG--LYS-871; 862-LEU--THR-867; GLU-982; LYS-1000; ASP-1037; ASP-1118 AND ASP-1171</scope>
    <source>
        <strain>Type A</strain>
    </source>
</reference>
<reference evidence="81" key="49">
    <citation type="journal article" date="2014" name="Nature">
        <title>Structural basis for recognition of synaptic vesicle protein 2C by botulinum neurotoxin A.</title>
        <authorList>
            <person name="Benoit R.M."/>
            <person name="Frey D."/>
            <person name="Hilbert M."/>
            <person name="Kevenaar J.T."/>
            <person name="Wieser M.M."/>
            <person name="Stirnimann C.U."/>
            <person name="McMillan D."/>
            <person name="Ceska T."/>
            <person name="Lebon F."/>
            <person name="Jaussi R."/>
            <person name="Steinmetz M.O."/>
            <person name="Schertler G.F."/>
            <person name="Hoogenraad C.C."/>
            <person name="Capitani G."/>
            <person name="Kammerer R.A."/>
        </authorList>
    </citation>
    <scope>X-RAY CRYSTALLOGRAPHY (2.30 ANGSTROMS) OF 871-1296 IN COMPLEX WITH SV2C RECEPTOR FRAGMENT</scope>
    <scope>FUNCTION (BOTULINUM NEUROTOXIN A HEAVY CHAIN)</scope>
    <scope>SUBUNIT</scope>
    <scope>SUBCELLULAR LOCATION (BOTULINUM NEUROTOXIN A HEAVY CHAIN)</scope>
    <scope>MUTAGENESIS OF 1145-THR-THR-1146; ARG-1156 AND ARG-1294</scope>
    <source>
        <strain>Type A</strain>
    </source>
</reference>
<reference evidence="82 83" key="50">
    <citation type="journal article" date="2016" name="Nat. Struct. Mol. Biol.">
        <title>N-linked glycosylation of SV2 is required for binding and uptake of botulinum neurotoxin A.</title>
        <authorList>
            <person name="Yao G."/>
            <person name="Zhang S."/>
            <person name="Mahrhold S."/>
            <person name="Lam K.H."/>
            <person name="Stern D."/>
            <person name="Bagramyan K."/>
            <person name="Perry K."/>
            <person name="Kalkum M."/>
            <person name="Rummel A."/>
            <person name="Dong M."/>
            <person name="Jin R."/>
        </authorList>
    </citation>
    <scope>X-RAY CRYSTALLOGRAPHY (2.00 ANGSTROMS) OF 872-1296 IN COMPLEX WITH HUMAN AND RAT SV2C RECEPTOR</scope>
    <scope>FUNCTION (BOTULINUM NEUROTOXIN TYPE A AND BOTULINUM NEUROTOXIN A HEAVY CHAIN)</scope>
    <scope>SV2 GLYCAN-BINDING</scope>
    <scope>MUTAGENESIS OF PHE-953; HIS-1064; 1145-THR-THR-1146; ARG-1156; GLY-1292 AND ARG-1294</scope>
    <source>
        <strain>Type A</strain>
    </source>
</reference>
<reference evidence="86 87" key="51">
    <citation type="journal article" date="2017" name="J. Am. Chem. Soc.">
        <title>Glycans confer specificity to the recognition of ganglioside receptors by botulinum neurotoxin A.</title>
        <authorList>
            <person name="Hamark C."/>
            <person name="Berntsson R.P."/>
            <person name="Masuyer G."/>
            <person name="Henriksson L.M."/>
            <person name="Gustafsson R."/>
            <person name="Stenmark P."/>
            <person name="Widmalm G."/>
        </authorList>
    </citation>
    <scope>X-RAY CRYSTALLOGRAPHY (2.00 ANGSTROMS) OF 876-1296 IN COMPLEX WITH GANGLIOSIDE ANALOG</scope>
    <scope>FUNCTION (BOTULINUM NEUROTOXIN A HEAVY CHAIN)</scope>
    <source>
        <strain>Type A</strain>
    </source>
</reference>
<reference evidence="84 85" key="52">
    <citation type="journal article" date="2018" name="PeerJ">
        <title>High resolution crystal structures of the receptor-binding domain of Clostridium botulinum neurotoxin serotypes A and FA.</title>
        <authorList>
            <person name="Davies J.R."/>
            <person name="Hackett G.S."/>
            <person name="Liu S.M."/>
            <person name="Acharya K.R."/>
        </authorList>
    </citation>
    <scope>X-RAY CRYSTALLOGRAPHY (1.45 ANGSTROMS) OF 871-1296</scope>
    <scope>DISULFIDE BOND</scope>
</reference>
<proteinExistence type="evidence at protein level"/>
<name>BXA1_CLOBO</name>
<sequence>MPFVNKQFNYKDPVNGVDIAYIKIPNVGQMQPVKAFKIHNKIWVIPERDTFTNPEEGDLNPPPEAKQVPVSYYDSTYLSTDNEKDNYLKGVTKLFERIYSTDLGRMLLTSIVRGIPFWGGSTIDTELKVIDTNCINVIQPDGSYRSEELNLVIIGPSADIIQFECKSFGHEVLNLTRNGYGSTQYIRFSPDFTFGFEESLEVDTNPLLGAGKFATDPAVTLAHELIHAGHRLYGIAINPNRVFKVNTNAYYEMSGLEVSFEELRTFGGHDAKFIDSLQENEFRLYYYNKFKDIASTLNKAKSIVGTTASLQYMKNVFKEKYLLSEDTSGKFSVDKLKFDKLYKMLTEIYTEDNFVKFFKVLNRKTYLNFDKAVFKINIVPKVNYTIYDGFNLRNTNLAANFNGQNTEINNMNFTKLKNFTGLFEFYKLLCVRGIITSKTKSLDKGYNKALNDLCIKVNNWDLFFSPSEDNFTNDLNKGEEITSDTNIEAAEENISLDLIQQYYLTFNFDNEPENISIENLSSDIIGQLELMPNIERFPNGKKYELDKYTMFHYLRAQEFEHGKSRIALTNSVNEALLNPSRVYTFFSSDYVKKVNKATEAAMFLGWVEQLVYDFTDETSEVSTTDKIADITIIIPYIGPALNIGNMLYKDDFVGALIFSGAVILLEFIPEIAIPVLGTFALVSYIANKVLTVQTIDNALSKRNEKWDEVYKYIVTNWLAKVNTQIDLIRKKMKEALENQAEATKAIINYQYNQYTEEEKNNINFNIDDLSSKLNESINKAMININKFLNQCSVSYLMNSMIPYGVKRLEDFDASLKDALLKYIYDNRGTLIGQVDRLKDKVNNTLSTDIPFQLSKYVDNQRLLSTFTEYIKNIINTSILNLRYESNHLIDLSRYASKINIGSKVNFDPIDKNQIQLFNLESSKIEVILKNAIVYNSMYENFSTSFWIRIPKYFNSISLNNEYTIINCMENNSGWKVSLNYGEIIWTLQDTQEIKQRVVFKYSQMINISDYINRWIFVTITNNRLNNSKIYINGRLIDQKPISNLGNIHASNNIMFKLDGCRDTHRYIWIKYFNLFDKELNEKEIKDLYDNQSNSGILKDFWGDYLQYDKPYYMLNLYDPNKYVDVNNVGIRGYMYLKGPRGSVMTTNIYLNSSLYRGTKFIIKKYASGNKDNIVRNNDRVYINVVVKNKEYRLATNASQAGVEKILSALEIPDVGNLSQVVVMKSKNDQGITNKCKMNLQDNNGNDIGFIGFHQFNNIAKLVASNWYNRQIERSSRTLGCSWEFIPVDDGWGERPL</sequence>